<organism>
    <name type="scientific">Homo sapiens</name>
    <name type="common">Human</name>
    <dbReference type="NCBI Taxonomy" id="9606"/>
    <lineage>
        <taxon>Eukaryota</taxon>
        <taxon>Metazoa</taxon>
        <taxon>Chordata</taxon>
        <taxon>Craniata</taxon>
        <taxon>Vertebrata</taxon>
        <taxon>Euteleostomi</taxon>
        <taxon>Mammalia</taxon>
        <taxon>Eutheria</taxon>
        <taxon>Euarchontoglires</taxon>
        <taxon>Primates</taxon>
        <taxon>Haplorrhini</taxon>
        <taxon>Catarrhini</taxon>
        <taxon>Hominidae</taxon>
        <taxon>Homo</taxon>
    </lineage>
</organism>
<comment type="function">
    <text evidence="5 7 15 21 25">As a major transporter of conjugated bile salts from plasma into the hepatocyte, it plays a key role in the enterohepatic circulation of bile salts necessary for the solubilization and absorption of dietary fat and fat-soluble vitamins (PubMed:14660639, PubMed:24867799, PubMed:34060352, PubMed:8132774). It is strictly dependent on the extracellular presence of sodium (PubMed:14660639, PubMed:24867799, PubMed:34060352, PubMed:8132774). It exhibits broad substrate specificity and transports various bile acids, such as taurocholate, cholate, as well as non-bile acid organic compounds, such as estrone sulfate (PubMed:14660639, PubMed:34060352). Works collaboratively with the ileal transporter (NTCP2), the organic solute transporter (OST), and the bile salt export pump (BSEP), to ensure efficacious biological recycling of bile acids during enterohepatic circulation (PubMed:33222321).</text>
</comment>
<comment type="function">
    <text evidence="6 17 18 19 20">(Microbial infection) Acts as an entry receptor for hepatitis B virus (HBV) (PubMed:23150796). The recognition for human SLC10A1/NTCP is highly specific (PubMed:35545671, PubMed:35580629, PubMed:35580630, PubMed:38233573).</text>
</comment>
<comment type="catalytic activity">
    <reaction evidence="5 17 18 19 20 22">
        <text>taurocholate(out) + 2 Na(+)(out) = taurocholate(in) + 2 Na(+)(in)</text>
        <dbReference type="Rhea" id="RHEA:71875"/>
        <dbReference type="ChEBI" id="CHEBI:29101"/>
        <dbReference type="ChEBI" id="CHEBI:36257"/>
    </reaction>
</comment>
<comment type="catalytic activity">
    <reaction evidence="5">
        <text>cholate(out) + 2 Na(+)(out) = cholate(in) + 2 Na(+)(in)</text>
        <dbReference type="Rhea" id="RHEA:71911"/>
        <dbReference type="ChEBI" id="CHEBI:29101"/>
        <dbReference type="ChEBI" id="CHEBI:29747"/>
    </reaction>
</comment>
<comment type="catalytic activity">
    <reaction evidence="5 22">
        <text>estrone 3-sulfate(out) + 2 Na(+)(out) = estrone 3-sulfate(in) + 2 Na(+)(in)</text>
        <dbReference type="Rhea" id="RHEA:71083"/>
        <dbReference type="ChEBI" id="CHEBI:29101"/>
        <dbReference type="ChEBI" id="CHEBI:60050"/>
    </reaction>
</comment>
<comment type="catalytic activity">
    <reaction evidence="1">
        <text>taurochenodeoxycholate(out) + 2 Na(+)(out) = taurochenodeoxycholate(in) + 2 Na(+)(in)</text>
        <dbReference type="Rhea" id="RHEA:71923"/>
        <dbReference type="ChEBI" id="CHEBI:9407"/>
        <dbReference type="ChEBI" id="CHEBI:29101"/>
    </reaction>
</comment>
<comment type="catalytic activity">
    <reaction evidence="1">
        <text>tauroursodeoxycholate(out) + 2 Na(+)(out) = tauroursodeoxycholate(in) + 2 Na(+)(in)</text>
        <dbReference type="Rhea" id="RHEA:71927"/>
        <dbReference type="ChEBI" id="CHEBI:29101"/>
        <dbReference type="ChEBI" id="CHEBI:132028"/>
    </reaction>
</comment>
<comment type="catalytic activity">
    <reaction evidence="1">
        <text>glycocholate(out) + 2 Na(+)(out) = glycocholate(in) + 2 Na(+)(in)</text>
        <dbReference type="Rhea" id="RHEA:71935"/>
        <dbReference type="ChEBI" id="CHEBI:29101"/>
        <dbReference type="ChEBI" id="CHEBI:29746"/>
    </reaction>
</comment>
<comment type="catalytic activity">
    <reaction evidence="1">
        <text>tauronorcholate(out) + 2 Na(+)(out) = tauronorcholate(in) + 2 Na(+)(in)</text>
        <dbReference type="Rhea" id="RHEA:71915"/>
        <dbReference type="ChEBI" id="CHEBI:29101"/>
        <dbReference type="ChEBI" id="CHEBI:191405"/>
    </reaction>
</comment>
<comment type="catalytic activity">
    <reaction evidence="1">
        <text>taurodeoxycholate(out) + 2 Na(+)(out) = taurodeoxycholate(in) + 2 Na(+)(in)</text>
        <dbReference type="Rhea" id="RHEA:72087"/>
        <dbReference type="ChEBI" id="CHEBI:29101"/>
        <dbReference type="ChEBI" id="CHEBI:36261"/>
    </reaction>
</comment>
<comment type="catalytic activity">
    <reaction evidence="1">
        <text>tauroallocholate(out) + 2 Na(+)(out) = tauroallocholate(in) + 2 Na(+)(in)</text>
        <dbReference type="Rhea" id="RHEA:51840"/>
        <dbReference type="ChEBI" id="CHEBI:29101"/>
        <dbReference type="ChEBI" id="CHEBI:191406"/>
    </reaction>
</comment>
<comment type="catalytic activity">
    <reaction evidence="1">
        <text>taurohyodeoxycholate(out) + 2 Na(+)(out) = taurohyodeoxycholate(in) + 2 Na(+)(in)</text>
        <dbReference type="Rhea" id="RHEA:72167"/>
        <dbReference type="ChEBI" id="CHEBI:29101"/>
        <dbReference type="ChEBI" id="CHEBI:191407"/>
    </reaction>
</comment>
<comment type="catalytic activity">
    <reaction evidence="1">
        <text>taurohyocholate(out) + 2 Na(+)(out) = taurohyocholate(in) + 2 Na(+)(in)</text>
        <dbReference type="Rhea" id="RHEA:72171"/>
        <dbReference type="ChEBI" id="CHEBI:29101"/>
        <dbReference type="ChEBI" id="CHEBI:58874"/>
    </reaction>
</comment>
<comment type="catalytic activity">
    <reaction evidence="1">
        <text>tauro-beta-muricholate(out) + 2 Na(+)(out) = tauro-beta-muricholate(in) + 2 Na(+)(in)</text>
        <dbReference type="Rhea" id="RHEA:72179"/>
        <dbReference type="ChEBI" id="CHEBI:29101"/>
        <dbReference type="ChEBI" id="CHEBI:133064"/>
    </reaction>
</comment>
<comment type="activity regulation">
    <text evidence="19 20">The transport of bile acids is sodium-dependent.</text>
</comment>
<comment type="biophysicochemical properties">
    <kinetics>
        <KM evidence="21">6.3 uM for taurocholate</KM>
        <KM evidence="22">10 uM for taurocholate</KM>
        <KM evidence="5">7.5 uM for taurocholate</KM>
        <KM evidence="7">15 uM for taurocholate</KM>
        <KM evidence="5">12 uM for cholate</KM>
        <KM evidence="22">60 uM for estrone 3-sulfate</KM>
        <KM evidence="5">27 uM for estrone 3-sulfate</KM>
        <KM evidence="15">67 uM for estrone 3-sulfate</KM>
        <Vmax evidence="22">333.0 pmol/min/mg enzyme with taurocholate as substrate</Vmax>
        <Vmax evidence="5">415.0 pmol/min/mg enzyme with taurocholate as substrate</Vmax>
        <Vmax evidence="5">139.0 pmol/min/mg enzyme with cholate as substrate</Vmax>
        <Vmax evidence="22">111.0 pmol/min/mg enzyme with estrone 3-sulfate as substrate</Vmax>
        <Vmax evidence="5">68.0 pmol/min/mg enzyme with estrone 3-sulfate as substrate</Vmax>
        <Vmax evidence="15">1060.0 pmol/min/mg enzyme with estrone 3-sulfate as substrate</Vmax>
        <Vmax evidence="7">130.0 pmol/min/mg enzyme with taurocholate as substrate</Vmax>
    </kinetics>
</comment>
<comment type="subunit">
    <text evidence="6 18 19 20">(Microbial infection) Interacts with the myristoylated pre-S1 domain of hepatitis B virus large envelope protein; myristoylation is essential for this interaction.</text>
</comment>
<comment type="interaction">
    <interactant intactId="EBI-3923031">
        <id>Q14973</id>
    </interactant>
    <interactant intactId="EBI-348517">
        <id>O95870</id>
        <label>ABHD16A</label>
    </interactant>
    <organismsDiffer>false</organismsDiffer>
    <experiments>3</experiments>
</comment>
<comment type="interaction">
    <interactant intactId="EBI-3923031">
        <id>Q14973</id>
    </interactant>
    <interactant intactId="EBI-2876927">
        <id>Q9ULC5</id>
        <label>ACSL5</label>
    </interactant>
    <organismsDiffer>false</organismsDiffer>
    <experiments>3</experiments>
</comment>
<comment type="interaction">
    <interactant intactId="EBI-3923031">
        <id>Q14973</id>
    </interactant>
    <interactant intactId="EBI-2803601">
        <id>Q9NRZ7</id>
        <label>AGPAT3</label>
    </interactant>
    <organismsDiffer>false</organismsDiffer>
    <experiments>3</experiments>
</comment>
<comment type="interaction">
    <interactant intactId="EBI-3923031">
        <id>Q14973</id>
    </interactant>
    <interactant intactId="EBI-2808844">
        <id>Q8N6S5</id>
        <label>ARL6IP6</label>
    </interactant>
    <organismsDiffer>false</organismsDiffer>
    <experiments>3</experiments>
</comment>
<comment type="interaction">
    <interactant intactId="EBI-3923031">
        <id>Q14973</id>
    </interactant>
    <interactant intactId="EBI-1172335">
        <id>P07306</id>
        <label>ASGR1</label>
    </interactant>
    <organismsDiffer>false</organismsDiffer>
    <experiments>3</experiments>
</comment>
<comment type="interaction">
    <interactant intactId="EBI-3923031">
        <id>Q14973</id>
    </interactant>
    <interactant intactId="EBI-3904417">
        <id>Q99437</id>
        <label>ATP6V0B</label>
    </interactant>
    <organismsDiffer>false</organismsDiffer>
    <experiments>3</experiments>
</comment>
<comment type="interaction">
    <interactant intactId="EBI-3923031">
        <id>Q14973</id>
    </interactant>
    <interactant intactId="EBI-3922513">
        <id>O95393</id>
        <label>BMP10</label>
    </interactant>
    <organismsDiffer>false</organismsDiffer>
    <experiments>3</experiments>
</comment>
<comment type="interaction">
    <interactant intactId="EBI-3923031">
        <id>Q14973</id>
    </interactant>
    <interactant intactId="EBI-2835920">
        <id>P06681</id>
        <label>C2</label>
    </interactant>
    <organismsDiffer>false</organismsDiffer>
    <experiments>3</experiments>
</comment>
<comment type="interaction">
    <interactant intactId="EBI-3923031">
        <id>Q14973</id>
    </interactant>
    <interactant intactId="EBI-9021639">
        <id>P07357</id>
        <label>C8A</label>
    </interactant>
    <organismsDiffer>false</organismsDiffer>
    <experiments>3</experiments>
</comment>
<comment type="interaction">
    <interactant intactId="EBI-3923031">
        <id>Q14973</id>
    </interactant>
    <interactant intactId="EBI-11579371">
        <id>Q9BXR6</id>
        <label>CFHR5</label>
    </interactant>
    <organismsDiffer>false</organismsDiffer>
    <experiments>3</experiments>
</comment>
<comment type="interaction">
    <interactant intactId="EBI-3923031">
        <id>Q14973</id>
    </interactant>
    <interactant intactId="EBI-12256978">
        <id>Q8N6F1-2</id>
        <label>CLDN19</label>
    </interactant>
    <organismsDiffer>false</organismsDiffer>
    <experiments>3</experiments>
</comment>
<comment type="interaction">
    <interactant intactId="EBI-3923031">
        <id>Q14973</id>
    </interactant>
    <interactant intactId="EBI-7247651">
        <id>Q96MX0</id>
        <label>CMTM3</label>
    </interactant>
    <organismsDiffer>false</organismsDiffer>
    <experiments>3</experiments>
</comment>
<comment type="interaction">
    <interactant intactId="EBI-3923031">
        <id>Q14973</id>
    </interactant>
    <interactant intactId="EBI-2834035">
        <id>Q5RI15</id>
        <label>COX20</label>
    </interactant>
    <organismsDiffer>false</organismsDiffer>
    <experiments>3</experiments>
</comment>
<comment type="interaction">
    <interactant intactId="EBI-3923031">
        <id>Q14973</id>
    </interactant>
    <interactant intactId="EBI-3911467">
        <id>Q07325</id>
        <label>CXCL9</label>
    </interactant>
    <organismsDiffer>false</organismsDiffer>
    <experiments>3</experiments>
</comment>
<comment type="interaction">
    <interactant intactId="EBI-3923031">
        <id>Q14973</id>
    </interactant>
    <interactant intactId="EBI-1046040">
        <id>P00387</id>
        <label>CYB5R3</label>
    </interactant>
    <organismsDiffer>false</organismsDiffer>
    <experiments>3</experiments>
</comment>
<comment type="interaction">
    <interactant intactId="EBI-3923031">
        <id>Q14973</id>
    </interactant>
    <interactant intactId="EBI-398977">
        <id>Q9BUN8</id>
        <label>DERL1</label>
    </interactant>
    <organismsDiffer>false</organismsDiffer>
    <experiments>3</experiments>
</comment>
<comment type="interaction">
    <interactant intactId="EBI-3923031">
        <id>Q14973</id>
    </interactant>
    <interactant intactId="EBI-12831978">
        <id>Q6ZPD8</id>
        <label>DGAT2L6</label>
    </interactant>
    <organismsDiffer>false</organismsDiffer>
    <experiments>3</experiments>
</comment>
<comment type="interaction">
    <interactant intactId="EBI-3923031">
        <id>Q14973</id>
    </interactant>
    <interactant intactId="EBI-11337888">
        <id>Q7L5A8</id>
        <label>FA2H</label>
    </interactant>
    <organismsDiffer>false</organismsDiffer>
    <experiments>3</experiments>
</comment>
<comment type="interaction">
    <interactant intactId="EBI-3923031">
        <id>Q14973</id>
    </interactant>
    <interactant intactId="EBI-12118888">
        <id>Q96D05-2</id>
        <label>FAM241B</label>
    </interactant>
    <organismsDiffer>false</organismsDiffer>
    <experiments>3</experiments>
</comment>
<comment type="interaction">
    <interactant intactId="EBI-3923031">
        <id>Q14973</id>
    </interactant>
    <interactant intactId="EBI-12142299">
        <id>Q96IV6</id>
        <label>FAXDC2</label>
    </interactant>
    <organismsDiffer>false</organismsDiffer>
    <experiments>3</experiments>
</comment>
<comment type="interaction">
    <interactant intactId="EBI-3923031">
        <id>Q14973</id>
    </interactant>
    <interactant intactId="EBI-714550">
        <id>P37268</id>
        <label>FDFT1</label>
    </interactant>
    <organismsDiffer>false</organismsDiffer>
    <experiments>3</experiments>
</comment>
<comment type="interaction">
    <interactant intactId="EBI-3923031">
        <id>Q14973</id>
    </interactant>
    <interactant intactId="EBI-12175685">
        <id>Q14802-3</id>
        <label>FXYD3</label>
    </interactant>
    <organismsDiffer>false</organismsDiffer>
    <experiments>3</experiments>
</comment>
<comment type="interaction">
    <interactant intactId="EBI-3923031">
        <id>Q14973</id>
    </interactant>
    <interactant intactId="EBI-713304">
        <id>Q9H0Q3</id>
        <label>FXYD6</label>
    </interactant>
    <organismsDiffer>false</organismsDiffer>
    <experiments>3</experiments>
</comment>
<comment type="interaction">
    <interactant intactId="EBI-3923031">
        <id>Q14973</id>
    </interactant>
    <interactant intactId="EBI-3436637">
        <id>P01350</id>
        <label>GAST</label>
    </interactant>
    <organismsDiffer>false</organismsDiffer>
    <experiments>3</experiments>
</comment>
<comment type="interaction">
    <interactant intactId="EBI-3923031">
        <id>Q14973</id>
    </interactant>
    <interactant intactId="EBI-2833330">
        <id>Q9NZC3</id>
        <label>GDE1</label>
    </interactant>
    <organismsDiffer>false</organismsDiffer>
    <experiments>3</experiments>
</comment>
<comment type="interaction">
    <interactant intactId="EBI-3923031">
        <id>Q14973</id>
    </interactant>
    <interactant intactId="EBI-6166686">
        <id>Q96F15</id>
        <label>GIMAP5</label>
    </interactant>
    <organismsDiffer>false</organismsDiffer>
    <experiments>3</experiments>
</comment>
<comment type="interaction">
    <interactant intactId="EBI-3923031">
        <id>Q14973</id>
    </interactant>
    <interactant intactId="EBI-4401517">
        <id>O14653</id>
        <label>GOSR2</label>
    </interactant>
    <organismsDiffer>false</organismsDiffer>
    <experiments>3</experiments>
</comment>
<comment type="interaction">
    <interactant intactId="EBI-3923031">
        <id>Q14973</id>
    </interactant>
    <interactant intactId="EBI-11955647">
        <id>Q8TDV0</id>
        <label>GPR151</label>
    </interactant>
    <organismsDiffer>false</organismsDiffer>
    <experiments>3</experiments>
</comment>
<comment type="interaction">
    <interactant intactId="EBI-3923031">
        <id>Q14973</id>
    </interactant>
    <interactant intactId="EBI-13345167">
        <id>Q8TDT2</id>
        <label>GPR152</label>
    </interactant>
    <organismsDiffer>false</organismsDiffer>
    <experiments>3</experiments>
</comment>
<comment type="interaction">
    <interactant intactId="EBI-3923031">
        <id>Q14973</id>
    </interactant>
    <interactant intactId="EBI-12167419">
        <id>Q6IBB0</id>
        <label>IFITM2</label>
    </interactant>
    <organismsDiffer>false</organismsDiffer>
    <experiments>3</experiments>
</comment>
<comment type="interaction">
    <interactant intactId="EBI-3923031">
        <id>Q14973</id>
    </interactant>
    <interactant intactId="EBI-7932862">
        <id>Q01628</id>
        <label>IFITM3</label>
    </interactant>
    <organismsDiffer>false</organismsDiffer>
    <experiments>3</experiments>
</comment>
<comment type="interaction">
    <interactant intactId="EBI-3923031">
        <id>Q14973</id>
    </interactant>
    <interactant intactId="EBI-2830349">
        <id>Q7Z4F1</id>
        <label>LRP10</label>
    </interactant>
    <organismsDiffer>false</organismsDiffer>
    <experiments>3</experiments>
</comment>
<comment type="interaction">
    <interactant intactId="EBI-3923031">
        <id>Q14973</id>
    </interactant>
    <interactant intactId="EBI-3930711">
        <id>P48449</id>
        <label>LSS</label>
    </interactant>
    <organismsDiffer>false</organismsDiffer>
    <experiments>3</experiments>
</comment>
<comment type="interaction">
    <interactant intactId="EBI-3923031">
        <id>Q14973</id>
    </interactant>
    <interactant intactId="EBI-3932027">
        <id>P21145</id>
        <label>MAL</label>
    </interactant>
    <organismsDiffer>false</organismsDiffer>
    <experiments>3</experiments>
</comment>
<comment type="interaction">
    <interactant intactId="EBI-3923031">
        <id>Q14973</id>
    </interactant>
    <interactant intactId="EBI-750078">
        <id>Q13021</id>
        <label>MALL</label>
    </interactant>
    <organismsDiffer>false</organismsDiffer>
    <experiments>3</experiments>
</comment>
<comment type="interaction">
    <interactant intactId="EBI-3923031">
        <id>Q14973</id>
    </interactant>
    <interactant intactId="EBI-2858252">
        <id>Q6ZSS7</id>
        <label>MFSD6</label>
    </interactant>
    <organismsDiffer>false</organismsDiffer>
    <experiments>3</experiments>
</comment>
<comment type="interaction">
    <interactant intactId="EBI-3923031">
        <id>Q14973</id>
    </interactant>
    <interactant intactId="EBI-2808234">
        <id>P11836</id>
        <label>MS4A1</label>
    </interactant>
    <organismsDiffer>false</organismsDiffer>
    <experiments>3</experiments>
</comment>
<comment type="interaction">
    <interactant intactId="EBI-3923031">
        <id>Q14973</id>
    </interactant>
    <interactant intactId="EBI-17641390">
        <id>A6NDP7</id>
        <label>MYADML2</label>
    </interactant>
    <organismsDiffer>false</organismsDiffer>
    <experiments>3</experiments>
</comment>
<comment type="interaction">
    <interactant intactId="EBI-3923031">
        <id>Q14973</id>
    </interactant>
    <interactant intactId="EBI-721517">
        <id>Q99519</id>
        <label>NEU1</label>
    </interactant>
    <organismsDiffer>false</organismsDiffer>
    <experiments>3</experiments>
</comment>
<comment type="interaction">
    <interactant intactId="EBI-3923031">
        <id>Q14973</id>
    </interactant>
    <interactant intactId="EBI-10317425">
        <id>Q9NZG7</id>
        <label>NINJ2</label>
    </interactant>
    <organismsDiffer>false</organismsDiffer>
    <experiments>3</experiments>
</comment>
<comment type="interaction">
    <interactant intactId="EBI-3923031">
        <id>Q14973</id>
    </interactant>
    <interactant intactId="EBI-1054848">
        <id>Q9P0S3</id>
        <label>ORMDL1</label>
    </interactant>
    <organismsDiffer>false</organismsDiffer>
    <experiments>3</experiments>
</comment>
<comment type="interaction">
    <interactant intactId="EBI-3923031">
        <id>Q14973</id>
    </interactant>
    <interactant intactId="EBI-11075081">
        <id>Q53FV1</id>
        <label>ORMDL2</label>
    </interactant>
    <organismsDiffer>false</organismsDiffer>
    <experiments>3</experiments>
</comment>
<comment type="interaction">
    <interactant intactId="EBI-3923031">
        <id>Q14973</id>
    </interactant>
    <interactant intactId="EBI-721750">
        <id>Q8N138</id>
        <label>ORMDL3</label>
    </interactant>
    <organismsDiffer>false</organismsDiffer>
    <experiments>3</experiments>
</comment>
<comment type="interaction">
    <interactant intactId="EBI-3923031">
        <id>Q14973</id>
    </interactant>
    <interactant intactId="EBI-12853910">
        <id>Q7RTS5</id>
        <label>OTOP3</label>
    </interactant>
    <organismsDiffer>false</organismsDiffer>
    <experiments>3</experiments>
</comment>
<comment type="interaction">
    <interactant intactId="EBI-3923031">
        <id>Q14973</id>
    </interactant>
    <interactant intactId="EBI-12213001">
        <id>I3L0A0</id>
        <label>PEDS1-UBE2V1</label>
    </interactant>
    <organismsDiffer>false</organismsDiffer>
    <experiments>3</experiments>
</comment>
<comment type="interaction">
    <interactant intactId="EBI-3923031">
        <id>Q14973</id>
    </interactant>
    <interactant intactId="EBI-981985">
        <id>Q9Y5Y5</id>
        <label>PEX16</label>
    </interactant>
    <organismsDiffer>false</organismsDiffer>
    <experiments>3</experiments>
</comment>
<comment type="interaction">
    <interactant intactId="EBI-3923031">
        <id>Q14973</id>
    </interactant>
    <interactant intactId="EBI-12257782">
        <id>Q99640-2</id>
        <label>PKMYT1</label>
    </interactant>
    <organismsDiffer>false</organismsDiffer>
    <experiments>3</experiments>
</comment>
<comment type="interaction">
    <interactant intactId="EBI-3923031">
        <id>Q14973</id>
    </interactant>
    <interactant intactId="EBI-8636004">
        <id>Q96GQ5</id>
        <label>RUSF1</label>
    </interactant>
    <organismsDiffer>false</organismsDiffer>
    <experiments>3</experiments>
</comment>
<comment type="interaction">
    <interactant intactId="EBI-3923031">
        <id>Q14973</id>
    </interactant>
    <interactant intactId="EBI-3917235">
        <id>Q9NTJ5</id>
        <label>SACM1L</label>
    </interactant>
    <organismsDiffer>false</organismsDiffer>
    <experiments>3</experiments>
</comment>
<comment type="interaction">
    <interactant intactId="EBI-3923031">
        <id>Q14973</id>
    </interactant>
    <interactant intactId="EBI-4403649">
        <id>Q969E2</id>
        <label>SCAMP4</label>
    </interactant>
    <organismsDiffer>false</organismsDiffer>
    <experiments>3</experiments>
</comment>
<comment type="interaction">
    <interactant intactId="EBI-3923031">
        <id>Q14973</id>
    </interactant>
    <interactant intactId="EBI-9679163">
        <id>Q9Y6D0</id>
        <label>SELENOK</label>
    </interactant>
    <organismsDiffer>false</organismsDiffer>
    <experiments>3</experiments>
</comment>
<comment type="interaction">
    <interactant intactId="EBI-3923031">
        <id>Q14973</id>
    </interactant>
    <interactant intactId="EBI-2854842">
        <id>Q8WV19</id>
        <label>SFT2D1</label>
    </interactant>
    <organismsDiffer>false</organismsDiffer>
    <experiments>3</experiments>
</comment>
<comment type="interaction">
    <interactant intactId="EBI-3923031">
        <id>Q14973</id>
    </interactant>
    <interactant intactId="EBI-4402330">
        <id>O95562</id>
        <label>SFT2D2</label>
    </interactant>
    <organismsDiffer>false</organismsDiffer>
    <experiments>3</experiments>
</comment>
<comment type="interaction">
    <interactant intactId="EBI-3923031">
        <id>Q14973</id>
    </interactant>
    <interactant intactId="EBI-355861">
        <id>Q9H9B4</id>
        <label>SFXN1</label>
    </interactant>
    <organismsDiffer>false</organismsDiffer>
    <experiments>3</experiments>
</comment>
<comment type="interaction">
    <interactant intactId="EBI-3923031">
        <id>Q14973</id>
    </interactant>
    <interactant intactId="EBI-12854384">
        <id>Q9Y666-2</id>
        <label>SLC12A7</label>
    </interactant>
    <organismsDiffer>false</organismsDiffer>
    <experiments>3</experiments>
</comment>
<comment type="interaction">
    <interactant intactId="EBI-3923031">
        <id>Q14973</id>
    </interactant>
    <interactant intactId="EBI-12243266">
        <id>Q7RTY0</id>
        <label>SLC16A13</label>
    </interactant>
    <organismsDiffer>false</organismsDiffer>
    <experiments>3</experiments>
</comment>
<comment type="interaction">
    <interactant intactId="EBI-3923031">
        <id>Q14973</id>
    </interactant>
    <interactant intactId="EBI-10281975">
        <id>Q96AG3</id>
        <label>SLC25A46</label>
    </interactant>
    <organismsDiffer>false</organismsDiffer>
    <experiments>3</experiments>
</comment>
<comment type="interaction">
    <interactant intactId="EBI-3923031">
        <id>Q14973</id>
    </interactant>
    <interactant intactId="EBI-12867720">
        <id>Q6ICL7</id>
        <label>SLC35E4</label>
    </interactant>
    <organismsDiffer>false</organismsDiffer>
    <experiments>3</experiments>
</comment>
<comment type="interaction">
    <interactant intactId="EBI-3923031">
        <id>Q14973</id>
    </interactant>
    <interactant intactId="EBI-9978441">
        <id>Q9H2H9</id>
        <label>SLC38A1</label>
    </interactant>
    <organismsDiffer>false</organismsDiffer>
    <experiments>3</experiments>
</comment>
<comment type="interaction">
    <interactant intactId="EBI-3923031">
        <id>Q14973</id>
    </interactant>
    <interactant intactId="EBI-10314552">
        <id>Q9NVC3</id>
        <label>SLC38A7</label>
    </interactant>
    <organismsDiffer>false</organismsDiffer>
    <experiments>3</experiments>
</comment>
<comment type="interaction">
    <interactant intactId="EBI-3923031">
        <id>Q14973</id>
    </interactant>
    <interactant intactId="EBI-12266234">
        <id>Q8IVJ1</id>
        <label>SLC41A1</label>
    </interactant>
    <organismsDiffer>false</organismsDiffer>
    <experiments>3</experiments>
</comment>
<comment type="interaction">
    <interactant intactId="EBI-3923031">
        <id>Q14973</id>
    </interactant>
    <interactant intactId="EBI-3907610">
        <id>Q8N2U9</id>
        <label>SLC66A2</label>
    </interactant>
    <organismsDiffer>false</organismsDiffer>
    <experiments>3</experiments>
</comment>
<comment type="interaction">
    <interactant intactId="EBI-3923031">
        <id>Q14973</id>
    </interactant>
    <interactant intactId="EBI-13066314">
        <id>Q8WY07</id>
        <label>SLC7A3</label>
    </interactant>
    <organismsDiffer>false</organismsDiffer>
    <experiments>3</experiments>
</comment>
<comment type="interaction">
    <interactant intactId="EBI-3923031">
        <id>Q14973</id>
    </interactant>
    <interactant intactId="EBI-12828299">
        <id>O60906</id>
        <label>SMPD2</label>
    </interactant>
    <organismsDiffer>false</organismsDiffer>
    <experiments>3</experiments>
</comment>
<comment type="interaction">
    <interactant intactId="EBI-3923031">
        <id>Q14973</id>
    </interactant>
    <interactant intactId="EBI-3221827">
        <id>O15400</id>
        <label>STX7</label>
    </interactant>
    <organismsDiffer>false</organismsDiffer>
    <experiments>3</experiments>
</comment>
<comment type="interaction">
    <interactant intactId="EBI-3923031">
        <id>Q14973</id>
    </interactant>
    <interactant intactId="EBI-747259">
        <id>Q03518</id>
        <label>TAP1</label>
    </interactant>
    <organismsDiffer>false</organismsDiffer>
    <experiments>3</experiments>
</comment>
<comment type="interaction">
    <interactant intactId="EBI-3923031">
        <id>Q14973</id>
    </interactant>
    <interactant intactId="EBI-355727">
        <id>P02786</id>
        <label>TFRC</label>
    </interactant>
    <organismsDiffer>false</organismsDiffer>
    <experiments>3</experiments>
</comment>
<comment type="interaction">
    <interactant intactId="EBI-3923031">
        <id>Q14973</id>
    </interactant>
    <interactant intactId="EBI-2820569">
        <id>Q969X1</id>
        <label>TMBIM1</label>
    </interactant>
    <organismsDiffer>false</organismsDiffer>
    <experiments>3</experiments>
</comment>
<comment type="interaction">
    <interactant intactId="EBI-3923031">
        <id>Q14973</id>
    </interactant>
    <interactant intactId="EBI-10171534">
        <id>A0PK00</id>
        <label>TMEM120B</label>
    </interactant>
    <organismsDiffer>false</organismsDiffer>
    <experiments>3</experiments>
</comment>
<comment type="interaction">
    <interactant intactId="EBI-3923031">
        <id>Q14973</id>
    </interactant>
    <interactant intactId="EBI-12155101">
        <id>Q9BTD3</id>
        <label>TMEM121</label>
    </interactant>
    <organismsDiffer>false</organismsDiffer>
    <experiments>3</experiments>
</comment>
<comment type="interaction">
    <interactant intactId="EBI-3923031">
        <id>Q14973</id>
    </interactant>
    <interactant intactId="EBI-348587">
        <id>Q9BVK8</id>
        <label>TMEM147</label>
    </interactant>
    <organismsDiffer>false</organismsDiffer>
    <experiments>3</experiments>
</comment>
<comment type="interaction">
    <interactant intactId="EBI-3923031">
        <id>Q14973</id>
    </interactant>
    <interactant intactId="EBI-347385">
        <id>Q9H0R3</id>
        <label>TMEM222</label>
    </interactant>
    <organismsDiffer>false</organismsDiffer>
    <experiments>3</experiments>
</comment>
<comment type="interaction">
    <interactant intactId="EBI-3923031">
        <id>Q14973</id>
    </interactant>
    <interactant intactId="EBI-8642211">
        <id>Q8WY98</id>
        <label>TMEM234</label>
    </interactant>
    <organismsDiffer>false</organismsDiffer>
    <experiments>3</experiments>
</comment>
<comment type="interaction">
    <interactant intactId="EBI-3923031">
        <id>Q14973</id>
    </interactant>
    <interactant intactId="EBI-11528917">
        <id>Q8WW34-2</id>
        <label>TMEM239</label>
    </interactant>
    <organismsDiffer>false</organismsDiffer>
    <experiments>3</experiments>
</comment>
<comment type="interaction">
    <interactant intactId="EBI-3923031">
        <id>Q14973</id>
    </interactant>
    <interactant intactId="EBI-10315004">
        <id>Q9NWH2</id>
        <label>TMEM242</label>
    </interactant>
    <organismsDiffer>false</organismsDiffer>
    <experiments>3</experiments>
</comment>
<comment type="interaction">
    <interactant intactId="EBI-3923031">
        <id>Q14973</id>
    </interactant>
    <interactant intactId="EBI-2852148">
        <id>Q9H2L4</id>
        <label>TMEM60</label>
    </interactant>
    <organismsDiffer>false</organismsDiffer>
    <experiments>3</experiments>
</comment>
<comment type="interaction">
    <interactant intactId="EBI-3923031">
        <id>Q14973</id>
    </interactant>
    <interactant intactId="EBI-2820477">
        <id>Q71RG4</id>
        <label>TMUB2</label>
    </interactant>
    <organismsDiffer>false</organismsDiffer>
    <experiments>3</experiments>
</comment>
<comment type="interaction">
    <interactant intactId="EBI-3923031">
        <id>Q14973</id>
    </interactant>
    <interactant intactId="EBI-10826510">
        <id>Q96B49</id>
        <label>TOMM6</label>
    </interactant>
    <organismsDiffer>false</organismsDiffer>
    <experiments>3</experiments>
</comment>
<comment type="interaction">
    <interactant intactId="EBI-3923031">
        <id>Q14973</id>
    </interactant>
    <interactant intactId="EBI-12195249">
        <id>Q5TGU0</id>
        <label>TSPO2</label>
    </interactant>
    <organismsDiffer>false</organismsDiffer>
    <experiments>3</experiments>
</comment>
<comment type="interaction">
    <interactant intactId="EBI-3923031">
        <id>Q14973</id>
    </interactant>
    <interactant intactId="EBI-11988865">
        <id>A5PKU2</id>
        <label>TUSC5</label>
    </interactant>
    <organismsDiffer>false</organismsDiffer>
    <experiments>3</experiments>
</comment>
<comment type="interaction">
    <interactant intactId="EBI-3923031">
        <id>Q14973</id>
    </interactant>
    <interactant intactId="EBI-11343401">
        <id>Q9NYZ1</id>
        <label>TVP23B</label>
    </interactant>
    <organismsDiffer>false</organismsDiffer>
    <experiments>3</experiments>
</comment>
<comment type="interaction">
    <interactant intactId="EBI-3923031">
        <id>Q14973</id>
    </interactant>
    <interactant intactId="EBI-7601760">
        <id>Q53HI1</id>
        <label>UNC50</label>
    </interactant>
    <organismsDiffer>false</organismsDiffer>
    <experiments>3</experiments>
</comment>
<comment type="interaction">
    <interactant intactId="EBI-3923031">
        <id>Q14973</id>
    </interactant>
    <interactant intactId="EBI-722343">
        <id>Q15836</id>
        <label>VAMP3</label>
    </interactant>
    <organismsDiffer>false</organismsDiffer>
    <experiments>3</experiments>
</comment>
<comment type="interaction">
    <interactant intactId="EBI-3923031">
        <id>Q14973</id>
    </interactant>
    <interactant intactId="EBI-2799703">
        <id>O95070</id>
        <label>YIF1A</label>
    </interactant>
    <organismsDiffer>false</organismsDiffer>
    <experiments>3</experiments>
</comment>
<comment type="interaction">
    <interactant intactId="EBI-3923031">
        <id>Q14973</id>
    </interactant>
    <interactant intactId="EBI-751253">
        <id>Q9BSR8</id>
        <label>YIPF4</label>
    </interactant>
    <organismsDiffer>false</organismsDiffer>
    <experiments>3</experiments>
</comment>
<comment type="interaction">
    <interactant intactId="EBI-3923031">
        <id>Q14973</id>
    </interactant>
    <interactant intactId="EBI-751210">
        <id>Q96EC8</id>
        <label>YIPF6</label>
    </interactant>
    <organismsDiffer>false</organismsDiffer>
    <experiments>3</experiments>
</comment>
<comment type="interaction">
    <interactant intactId="EBI-3923031">
        <id>Q14973</id>
    </interactant>
    <interactant intactId="EBI-2857623">
        <id>Q96FB2</id>
    </interactant>
    <organismsDiffer>false</organismsDiffer>
    <experiments>3</experiments>
</comment>
<comment type="subcellular location">
    <subcellularLocation>
        <location evidence="5 7">Cell membrane</location>
        <topology evidence="17 18 19 20">Multi-pass membrane protein</topology>
    </subcellularLocation>
</comment>
<comment type="tissue specificity">
    <text evidence="3 4 22">Expressed in liver (PubMed:11031103, PubMed:12409283). Expressed in placental trophoblasts (PubMed:12409283).</text>
</comment>
<comment type="disease" evidence="5 7 9 10 11 12 13 16">
    <disease id="DI-06067">
        <name>Hypercholanemia, familial, 2</name>
        <acronym>FHCA2</acronym>
        <description>An autosomal recessive inborn error of metabolism characterized by persistently increased plasma levels of conjugated bile salts apparent from infancy, fat malabsorption and impaired absorption of fat-soluble vitamins, including D and K. Most patients are asymptomatic. Some neonates may have transient jaundice or transiently elevated liver enzymes.</description>
        <dbReference type="MIM" id="619256"/>
    </disease>
    <text>The disease is caused by variants affecting the gene represented in this entry.</text>
</comment>
<comment type="similarity">
    <text evidence="30">Belongs to the bile acid:sodium symporter (BASS) (TC 2.A.28) family.</text>
</comment>
<name>NTCP_HUMAN</name>
<gene>
    <name type="primary">SLC10A1</name>
    <name type="synonym">NTCP</name>
    <name type="ORF">GIG29</name>
</gene>
<evidence type="ECO:0000250" key="1">
    <source>
        <dbReference type="UniProtKB" id="O97736"/>
    </source>
</evidence>
<evidence type="ECO:0000255" key="2"/>
<evidence type="ECO:0000269" key="3">
    <source>
    </source>
</evidence>
<evidence type="ECO:0000269" key="4">
    <source>
    </source>
</evidence>
<evidence type="ECO:0000269" key="5">
    <source>
    </source>
</evidence>
<evidence type="ECO:0000269" key="6">
    <source>
    </source>
</evidence>
<evidence type="ECO:0000269" key="7">
    <source>
    </source>
</evidence>
<evidence type="ECO:0000269" key="8">
    <source>
    </source>
</evidence>
<evidence type="ECO:0000269" key="9">
    <source>
    </source>
</evidence>
<evidence type="ECO:0000269" key="10">
    <source>
    </source>
</evidence>
<evidence type="ECO:0000269" key="11">
    <source>
    </source>
</evidence>
<evidence type="ECO:0000269" key="12">
    <source>
    </source>
</evidence>
<evidence type="ECO:0000269" key="13">
    <source>
    </source>
</evidence>
<evidence type="ECO:0000269" key="14">
    <source>
    </source>
</evidence>
<evidence type="ECO:0000269" key="15">
    <source>
    </source>
</evidence>
<evidence type="ECO:0000269" key="16">
    <source>
    </source>
</evidence>
<evidence type="ECO:0000269" key="17">
    <source>
    </source>
</evidence>
<evidence type="ECO:0000269" key="18">
    <source>
    </source>
</evidence>
<evidence type="ECO:0000269" key="19">
    <source>
    </source>
</evidence>
<evidence type="ECO:0000269" key="20">
    <source>
    </source>
</evidence>
<evidence type="ECO:0000269" key="21">
    <source>
    </source>
</evidence>
<evidence type="ECO:0000269" key="22">
    <source>
    </source>
</evidence>
<evidence type="ECO:0000303" key="23">
    <source>
    </source>
</evidence>
<evidence type="ECO:0000303" key="24">
    <source>
    </source>
</evidence>
<evidence type="ECO:0000303" key="25">
    <source>
    </source>
</evidence>
<evidence type="ECO:0000303" key="26">
    <source>
    </source>
</evidence>
<evidence type="ECO:0000303" key="27">
    <source>
    </source>
</evidence>
<evidence type="ECO:0000303" key="28">
    <source>
    </source>
</evidence>
<evidence type="ECO:0000303" key="29">
    <source>
    </source>
</evidence>
<evidence type="ECO:0000305" key="30"/>
<evidence type="ECO:0007744" key="31">
    <source>
        <dbReference type="PDB" id="7FCI"/>
    </source>
</evidence>
<evidence type="ECO:0007744" key="32">
    <source>
        <dbReference type="PDB" id="7PQG"/>
    </source>
</evidence>
<evidence type="ECO:0007744" key="33">
    <source>
        <dbReference type="PDB" id="7PQQ"/>
    </source>
</evidence>
<evidence type="ECO:0007744" key="34">
    <source>
        <dbReference type="PDB" id="7VAD"/>
    </source>
</evidence>
<evidence type="ECO:0007744" key="35">
    <source>
        <dbReference type="PDB" id="7VAG"/>
    </source>
</evidence>
<evidence type="ECO:0007744" key="36">
    <source>
        <dbReference type="PDB" id="7WSI"/>
    </source>
</evidence>
<evidence type="ECO:0007744" key="37">
    <source>
        <dbReference type="PDB" id="8HRX"/>
    </source>
</evidence>
<evidence type="ECO:0007744" key="38">
    <source>
        <dbReference type="PDB" id="8HRY"/>
    </source>
</evidence>
<evidence type="ECO:0007829" key="39">
    <source>
        <dbReference type="PDB" id="7FCI"/>
    </source>
</evidence>
<evidence type="ECO:0007829" key="40">
    <source>
        <dbReference type="PDB" id="7ZYI"/>
    </source>
</evidence>
<evidence type="ECO:0007829" key="41">
    <source>
        <dbReference type="PDB" id="8HRX"/>
    </source>
</evidence>
<keyword id="KW-0002">3D-structure</keyword>
<keyword id="KW-1003">Cell membrane</keyword>
<keyword id="KW-0225">Disease variant</keyword>
<keyword id="KW-0325">Glycoprotein</keyword>
<keyword id="KW-1183">Host cell receptor for virus entry</keyword>
<keyword id="KW-0945">Host-virus interaction</keyword>
<keyword id="KW-0406">Ion transport</keyword>
<keyword id="KW-0445">Lipid transport</keyword>
<keyword id="KW-0472">Membrane</keyword>
<keyword id="KW-1267">Proteomics identification</keyword>
<keyword id="KW-0675">Receptor</keyword>
<keyword id="KW-1185">Reference proteome</keyword>
<keyword id="KW-0915">Sodium</keyword>
<keyword id="KW-0739">Sodium transport</keyword>
<keyword id="KW-0769">Symport</keyword>
<keyword id="KW-0812">Transmembrane</keyword>
<keyword id="KW-1133">Transmembrane helix</keyword>
<keyword id="KW-0813">Transport</keyword>
<proteinExistence type="evidence at protein level"/>
<accession>Q14973</accession>
<accession>B9EGB6</accession>
<accession>Q2TU29</accession>
<reference key="1">
    <citation type="journal article" date="1994" name="J. Clin. Invest.">
        <title>Molecular cloning, chromosomal localization, and functional characterization of a human liver Na+/bile acid cotransporter.</title>
        <authorList>
            <person name="Hagenbuch B."/>
            <person name="Meier P.J."/>
        </authorList>
    </citation>
    <scope>NUCLEOTIDE SEQUENCE [MRNA]</scope>
    <scope>FUNCTION</scope>
    <scope>TRANSPORT ACTIVITY</scope>
    <scope>BIOPHYSICOCHEMICAL PROPERTIES</scope>
    <source>
        <tissue>Liver</tissue>
    </source>
</reference>
<reference key="2">
    <citation type="submission" date="2004-02" db="EMBL/GenBank/DDBJ databases">
        <title>Identification of a human cell growth inhibition gene.</title>
        <authorList>
            <person name="Kim J.W."/>
        </authorList>
    </citation>
    <scope>NUCLEOTIDE SEQUENCE [LARGE SCALE MRNA]</scope>
</reference>
<reference key="3">
    <citation type="submission" date="2005-07" db="EMBL/GenBank/DDBJ databases">
        <authorList>
            <person name="Mural R.J."/>
            <person name="Istrail S."/>
            <person name="Sutton G.G."/>
            <person name="Florea L."/>
            <person name="Halpern A.L."/>
            <person name="Mobarry C.M."/>
            <person name="Lippert R."/>
            <person name="Walenz B."/>
            <person name="Shatkay H."/>
            <person name="Dew I."/>
            <person name="Miller J.R."/>
            <person name="Flanigan M.J."/>
            <person name="Edwards N.J."/>
            <person name="Bolanos R."/>
            <person name="Fasulo D."/>
            <person name="Halldorsson B.V."/>
            <person name="Hannenhalli S."/>
            <person name="Turner R."/>
            <person name="Yooseph S."/>
            <person name="Lu F."/>
            <person name="Nusskern D.R."/>
            <person name="Shue B.C."/>
            <person name="Zheng X.H."/>
            <person name="Zhong F."/>
            <person name="Delcher A.L."/>
            <person name="Huson D.H."/>
            <person name="Kravitz S.A."/>
            <person name="Mouchard L."/>
            <person name="Reinert K."/>
            <person name="Remington K.A."/>
            <person name="Clark A.G."/>
            <person name="Waterman M.S."/>
            <person name="Eichler E.E."/>
            <person name="Adams M.D."/>
            <person name="Hunkapiller M.W."/>
            <person name="Myers E.W."/>
            <person name="Venter J.C."/>
        </authorList>
    </citation>
    <scope>NUCLEOTIDE SEQUENCE [LARGE SCALE GENOMIC DNA]</scope>
</reference>
<reference key="4">
    <citation type="journal article" date="2004" name="Genome Res.">
        <title>The status, quality, and expansion of the NIH full-length cDNA project: the Mammalian Gene Collection (MGC).</title>
        <authorList>
            <consortium name="The MGC Project Team"/>
        </authorList>
    </citation>
    <scope>NUCLEOTIDE SEQUENCE [LARGE SCALE MRNA]</scope>
    <source>
        <tissue>Brain</tissue>
        <tissue>Testis</tissue>
    </source>
</reference>
<reference key="5">
    <citation type="journal article" date="1998" name="Am. J. Physiol.">
        <title>Expression and transport properties of the human ileal and renal sodium-dependent bile acid transporter.</title>
        <authorList>
            <person name="Craddock A.L."/>
            <person name="Love M.W."/>
            <person name="Daniel R.W."/>
            <person name="Kirby L.C."/>
            <person name="Walters H.C."/>
            <person name="Wong M.H."/>
            <person name="Dawson P.A."/>
        </authorList>
    </citation>
    <scope>FUNCTION</scope>
    <scope>TRANSPORT ACTIVITY</scope>
    <scope>TISSUE SPECIFICITY</scope>
    <scope>BIOPHYSICOCHEMICAL PROPERTIES</scope>
</reference>
<reference key="6">
    <citation type="journal article" date="2000" name="Genomics">
        <title>Structural and functional characterization of liver cell-specific activity of the human sodium/taurocholate cotransporter.</title>
        <authorList>
            <person name="Shiao T."/>
            <person name="Iwahashi M."/>
            <person name="Fortune J."/>
            <person name="Quattrochi L."/>
            <person name="Bowman S."/>
            <person name="Wick M."/>
            <person name="Qadri I."/>
            <person name="Simon F.R."/>
        </authorList>
    </citation>
    <scope>TISSUE SPECIFICITY</scope>
</reference>
<reference key="7">
    <citation type="journal article" date="2003" name="Am. J. Physiol.">
        <title>Characterization and identification of steroid sulfate transporters of human placenta.</title>
        <authorList>
            <person name="Ugele B."/>
            <person name="St-Pierre M.V."/>
            <person name="Pihusch M."/>
            <person name="Bahn A."/>
            <person name="Hantschmann P."/>
        </authorList>
    </citation>
    <scope>TISSUE SPECIFICITY</scope>
</reference>
<reference key="8">
    <citation type="journal article" date="2004" name="J. Biol. Chem.">
        <title>Ethnicity-dependent polymorphism in Na+-taurocholate cotransporting polypeptide (SLC10A1) reveals a domain critical for bile acid substrate recognition.</title>
        <authorList>
            <person name="Ho R.H."/>
            <person name="Leake B.F."/>
            <person name="Roberts R.L."/>
            <person name="Lee W."/>
            <person name="Kim R.B."/>
        </authorList>
    </citation>
    <scope>FUNCTION</scope>
    <scope>SUBCELLULAR LOCATION</scope>
    <scope>VARIANTS THR-223; THR-279 AND GLU-314</scope>
    <scope>VARIANT FHCA2 PHE-267</scope>
    <scope>CHARACTERIZATION OF VARIANT FHCA2 PHE-267</scope>
    <scope>CHARACTERIZATION OF VARIANTS THR-279 AND GLU-314</scope>
    <scope>TRANSPORT ACTIVITY</scope>
    <scope>BIOPHYSICOCHEMICAL PROPERTIES</scope>
</reference>
<reference key="9">
    <citation type="journal article" date="2012" name="Elife">
        <title>Sodium taurocholate cotransporting polypeptide is a functional receptor for human hepatitis B and D virus.</title>
        <authorList>
            <person name="Yan H."/>
            <person name="Zhong G."/>
            <person name="Xu G."/>
            <person name="He W."/>
            <person name="Jing Z."/>
            <person name="Gao Z."/>
            <person name="Huang Y."/>
            <person name="Qi Y."/>
            <person name="Peng B."/>
            <person name="Wang H."/>
            <person name="Fu L."/>
            <person name="Song M."/>
            <person name="Chen P."/>
            <person name="Gao W."/>
            <person name="Ren B."/>
            <person name="Sun Y."/>
            <person name="Cai T."/>
            <person name="Feng X."/>
            <person name="Sui J."/>
            <person name="Li W."/>
        </authorList>
    </citation>
    <scope>FUNCTION (MICROBIAL INFECTION)</scope>
    <scope>INTERACTION WITH HEPATITIS B VIRUS LARGE ENVELOPE PROTEIN</scope>
</reference>
<reference key="10">
    <citation type="journal article" date="2015" name="Hepatology">
        <title>Sodium taurocholate cotransporting polypeptide (SLC10A1) deficiency: conjugated hypercholanemia without a clear clinical phenotype.</title>
        <authorList>
            <person name="Vaz F.M."/>
            <person name="Paulusma C.C."/>
            <person name="Huidekoper H."/>
            <person name="de Ru M."/>
            <person name="Lim C."/>
            <person name="Koster J."/>
            <person name="Ho-Mok K."/>
            <person name="Bootsma A.H."/>
            <person name="Groen A.K."/>
            <person name="Schaap F.G."/>
            <person name="Oude Elferink R.P."/>
            <person name="Waterham H.R."/>
            <person name="Wanders R.J."/>
        </authorList>
    </citation>
    <scope>FUNCTION</scope>
    <scope>SUBCELLULAR LOCATION</scope>
    <scope>VARIANT FHCA2 HIS-252</scope>
    <scope>CHARACTERIZATION OF VARIANT FHCA2 HIS-252</scope>
    <scope>TRANSPORT ACTIVITY</scope>
    <scope>BIOPHYSICOCHEMICAL PROPERTIES</scope>
</reference>
<reference key="11">
    <citation type="journal article" date="2021" name="SLAS Discovery">
        <title>Functional and Pharmacological Comparison of Human and Mouse Na+/Taurocholate Cotransporting Polypeptide (NTCP).</title>
        <authorList>
            <person name="Floerl S."/>
            <person name="Kuehne A."/>
            <person name="Geyer J."/>
            <person name="Brockmoeller J."/>
            <person name="Tzvetkov M.V."/>
            <person name="Hagos Y."/>
        </authorList>
    </citation>
    <scope>FUNCTION</scope>
    <scope>TRANSPORT ACTIVITY</scope>
    <scope>BIOPHYSICOCHEMICAL PROPERTIES</scope>
</reference>
<reference key="12">
    <citation type="journal article" date="2021" name="Hepatology">
        <title>Targeting the Four Pillars of Enterohepatic Bile Salt Cycling; Lessons From Genetics and Pharmacology.</title>
        <authorList>
            <person name="Kunst R.F."/>
            <person name="Verkade H.J."/>
            <person name="Oude Elferink R.P.J."/>
            <person name="van de Graaf S.F.J."/>
        </authorList>
    </citation>
    <scope>FUNCTION</scope>
</reference>
<reference evidence="32 33" key="13">
    <citation type="journal article" date="2022" name="Nature">
        <title>Structural basis of sodium-dependent bile salt uptake into the liver.</title>
        <authorList>
            <person name="Goutam K."/>
            <person name="Ielasi F.S."/>
            <person name="Pardon E."/>
            <person name="Steyaert J."/>
            <person name="Reyes N."/>
        </authorList>
    </citation>
    <scope>STRUCTURE BY ELECTRON MICROSCOPY (3.30 ANGSTROMS) OF 3-328</scope>
    <scope>FUNCTION (MICROBIAL INFECTION)</scope>
    <scope>CATALYTIC ACTIVITY</scope>
    <scope>SUBCELLULAR LOCATION</scope>
    <scope>TOPOLOGY</scope>
</reference>
<reference evidence="34 35 36" key="14">
    <citation type="journal article" date="2022" name="Nature">
        <title>Structure of the bile acid transporter and HBV receptor NTCP.</title>
        <authorList>
            <person name="Asami J."/>
            <person name="Kimura K.T."/>
            <person name="Fujita-Fujiharu Y."/>
            <person name="Ishida H."/>
            <person name="Zhang Z."/>
            <person name="Nomura Y."/>
            <person name="Liu K."/>
            <person name="Uemura T."/>
            <person name="Sato Y."/>
            <person name="Ono M."/>
            <person name="Yamamoto M."/>
            <person name="Noda T."/>
            <person name="Shigematsu H."/>
            <person name="Drew D."/>
            <person name="Iwata S."/>
            <person name="Shimizu T."/>
            <person name="Nomura N."/>
            <person name="Ohto U."/>
        </authorList>
    </citation>
    <scope>STRUCTURE BY ELECTRON MICROSCOPY (3.32 ANGSTROMS) OF 1-319</scope>
    <scope>FUNCTION (MICROBIAL INFECTION)</scope>
    <scope>CATALYTIC ACTIVITY</scope>
    <scope>INTERACTION WITH HBV PRE-S1 PEPTIDE</scope>
    <scope>SUBCELLULAR LOCATION</scope>
    <scope>TOPOLOGY</scope>
    <scope>CHARACTERIZATION OF VARIANT PHE-267</scope>
    <scope>MUTAGENESIS OF LYS-20; LEU-27; VAL-202; GLN-261 AND VAL-263</scope>
</reference>
<reference evidence="31" key="15">
    <citation type="journal article" date="2022" name="Nature">
        <title>Structural insights into the HBV receptor and bile acid transporter NTCP.</title>
        <authorList>
            <person name="Park J.H."/>
            <person name="Iwamoto M."/>
            <person name="Yun J.H."/>
            <person name="Uchikubo-Kamo T."/>
            <person name="Son D."/>
            <person name="Jin Z."/>
            <person name="Yoshida H."/>
            <person name="Ohki M."/>
            <person name="Ishimoto N."/>
            <person name="Mizutani K."/>
            <person name="Oshima M."/>
            <person name="Muramatsu M."/>
            <person name="Wakita T."/>
            <person name="Shirouzu M."/>
            <person name="Liu K."/>
            <person name="Uemura T."/>
            <person name="Nomura N."/>
            <person name="Iwata S."/>
            <person name="Watashi K."/>
            <person name="Tame J.R.H."/>
            <person name="Nishizawa T."/>
            <person name="Lee W."/>
            <person name="Park S.Y."/>
        </authorList>
    </citation>
    <scope>STRUCTURE BY ELECTRON MICROSCOPY (3.30 ANGSTROMS)</scope>
    <scope>FUNCTION (MICROBIAL INFECTION)</scope>
    <scope>CATALYTIC ACTIVITY</scope>
    <scope>ACTIVITY REGULATION</scope>
    <scope>INTERACTION WITH HBV PRE-S1 PEPTIDE</scope>
    <scope>SUBCELLULAR LOCATION</scope>
    <scope>TOPOLOGY</scope>
    <scope>MUTAGENESIS OF LEU-27; LEU-31 AND LEU-35</scope>
</reference>
<reference evidence="37 38" key="16">
    <citation type="journal article" date="2024" name="Nat. Struct. Mol. Biol.">
        <title>Structural basis of hepatitis B virus receptor binding.</title>
        <authorList>
            <person name="Asami J."/>
            <person name="Park J.H."/>
            <person name="Nomura Y."/>
            <person name="Kobayashi C."/>
            <person name="Mifune J."/>
            <person name="Ishimoto N."/>
            <person name="Uemura T."/>
            <person name="Liu K."/>
            <person name="Sato Y."/>
            <person name="Zhang Z."/>
            <person name="Muramatsu M."/>
            <person name="Wakita T."/>
            <person name="Drew D."/>
            <person name="Iwata S."/>
            <person name="Shimizu T."/>
            <person name="Watashi K."/>
            <person name="Park S.Y."/>
            <person name="Nomura N."/>
            <person name="Ohto U."/>
        </authorList>
    </citation>
    <scope>STRUCTURE BY ELECTRON MICROSCOPY (2.89 ANGSTROMS) OF 1-319 IN COMPLEX WITH HBV PRE-S1 PEPTIDE</scope>
    <scope>FUNCTION (MICROBIAL INFECTION)</scope>
    <scope>CATALYTIC ACTIVITY</scope>
    <scope>ACTIVITY REGULATION</scope>
    <scope>INTERACTION WITH HBV PRE-S1 PEPTIDE</scope>
    <scope>SUBCELLULAR LOCATION</scope>
    <scope>TOPOLOGY</scope>
    <scope>MUTAGENESIS OF GLN-264; THR-268 AND VAL-272</scope>
</reference>
<reference key="17">
    <citation type="journal article" date="2015" name="Hepatology">
        <title>The p.Ser267Phe variant in SLC10A1 is associated with resistance to chronic hepatitis B.</title>
        <authorList>
            <person name="Peng L."/>
            <person name="Zhao Q."/>
            <person name="Li Q."/>
            <person name="Li M."/>
            <person name="Li C."/>
            <person name="Xu T."/>
            <person name="Jing X."/>
            <person name="Zhu X."/>
            <person name="Wang Y."/>
            <person name="Li F."/>
            <person name="Liu R."/>
            <person name="Zhong C."/>
            <person name="Pan Q."/>
            <person name="Zeng B."/>
            <person name="Liao Q."/>
            <person name="Hu B."/>
            <person name="Hu Z.X."/>
            <person name="Huang Y.S."/>
            <person name="Sham P."/>
            <person name="Liu J."/>
            <person name="Xu S."/>
            <person name="Wang J."/>
            <person name="Gao Z.L."/>
            <person name="Wang Y."/>
        </authorList>
    </citation>
    <scope>ASSOCIATION OF VARIANT PHE-267 WITH RESISTANCE TO CHRONIC HEPATITIS B</scope>
</reference>
<reference key="18">
    <citation type="journal article" date="2016" name="Exp. Ther. Med.">
        <title>Clinical and molecular study of a pediatric patient with sodium taurocholate cotransporting polypeptide deficiency.</title>
        <authorList>
            <person name="Deng M."/>
            <person name="Mao M."/>
            <person name="Guo L."/>
            <person name="Chen F.P."/>
            <person name="Wen W.R."/>
            <person name="Song Y.Z."/>
        </authorList>
    </citation>
    <scope>VARIANT FHCA2 PHE-267</scope>
    <scope>INVOLVEMENT IN FHCA2</scope>
</reference>
<reference key="19">
    <citation type="journal article" date="2017" name="J. Inherit. Metab. Dis.">
        <title>NTCP deficiency and persistently raised bile salts: an adult case.</title>
        <authorList>
            <person name="Van Herpe F."/>
            <person name="Waterham H.R."/>
            <person name="Adams C.J."/>
            <person name="Mannens M."/>
            <person name="Bikker H."/>
            <person name="Vaz F.M."/>
            <person name="Cassiman D."/>
        </authorList>
    </citation>
    <scope>VARIANT FHCA2 PHE-267</scope>
</reference>
<reference key="20">
    <citation type="journal article" date="2017" name="Oncotarget">
        <title>Sodium taurocholate cotransporting polypeptide (NTCP) deficiency: Identification of a novel SLC10A1 mutation in two unrelated infants presenting with neonatal indirect hyperbilirubinemia and remarkable hypercholanemia.</title>
        <authorList>
            <person name="Qiu J.W."/>
            <person name="Deng M."/>
            <person name="Cheng Y."/>
            <person name="Atif R.M."/>
            <person name="Lin W.X."/>
            <person name="Guo L."/>
            <person name="Li H."/>
            <person name="Song Y.Z."/>
        </authorList>
    </citation>
    <scope>VARIANTS FHCA2 THR-88 AND PHE-267</scope>
</reference>
<reference key="21">
    <citation type="journal article" date="2017" name="Sci. Rep.">
        <title>Homozygous p.Ser267Phe in SLC10A1 is associated with a new type of hypercholanemia and implications for personalized medicine.</title>
        <authorList>
            <person name="Liu R."/>
            <person name="Chen C."/>
            <person name="Xia X."/>
            <person name="Liao Q."/>
            <person name="Wang Q."/>
            <person name="Newcombe P.J."/>
            <person name="Xu S."/>
            <person name="Chen M."/>
            <person name="Ding Y."/>
            <person name="Li X."/>
            <person name="Liao Z."/>
            <person name="Li F."/>
            <person name="Du M."/>
            <person name="Huang H."/>
            <person name="Dong R."/>
            <person name="Deng W."/>
            <person name="Wang Y."/>
            <person name="Zeng B."/>
            <person name="Pan Q."/>
            <person name="Jiang D."/>
            <person name="Zeng H."/>
            <person name="Sham P."/>
            <person name="Cao Y."/>
            <person name="Maxwell P.H."/>
            <person name="Gao Z.L."/>
            <person name="Peng L."/>
            <person name="Wang Y."/>
        </authorList>
    </citation>
    <scope>VARIANT PHE-267</scope>
    <scope>INVOLVEMENT IN FHCA2</scope>
</reference>
<reference key="22">
    <citation type="journal article" date="2019" name="Mol. Med. Report.">
        <title>Clinical and molecular characterization of four patients with NTCP deficiency from two unrelated families harboring the novel SLC10A1 variant c.595A&gt;C (p.Ser199Arg).</title>
        <authorList>
            <person name="Li H."/>
            <person name="Deng M."/>
            <person name="Guo L."/>
            <person name="Qiu J.W."/>
            <person name="Lin G.Z."/>
            <person name="Long X.L."/>
            <person name="Xiao X.M."/>
            <person name="Song Y.Z."/>
        </authorList>
    </citation>
    <scope>VARIANTS FHCA2 ARG-199 AND PHE-267</scope>
</reference>
<reference key="23">
    <citation type="journal article" date="2020" name="Mol. Pharm.">
        <title>In vitro functional characterization and in silico prediction of rare genetic variation in the bile acid and drug transporter, Na+-taurocholate cotransporting polypeptide (NTCP, SLC10A1).</title>
        <authorList>
            <person name="Russell L.E."/>
            <person name="Zhou Y."/>
            <person name="Lauschke V.M."/>
            <person name="Kim R.B."/>
        </authorList>
    </citation>
    <scope>CHARACTERIZATION OF VARIANTS CYS-21; THR-39; LEU-41; THR-64; THR-73; THR-88; PRO-138; MET-159; GLN-180; GLU-190; THR-232; LEU-234; PHE-241; TRP-249; CYS-252; SER-252; SER-258; THR-279 AND GLU-293</scope>
</reference>
<reference key="24">
    <citation type="journal article" date="2021" name="Liver Int.">
        <title>Clinical characterization of NTCP deficiency in paediatric patients: A case-control study based on SLC10A1 genotyping analysis.</title>
        <authorList>
            <person name="Deng L.J."/>
            <person name="Ouyang W.X."/>
            <person name="Liu R."/>
            <person name="Deng M."/>
            <person name="Qiu J.W."/>
            <person name="Yaqub M.R."/>
            <person name="Raza M.A."/>
            <person name="Lin W.X."/>
            <person name="Guo L."/>
            <person name="Li H."/>
            <person name="Chen F.P."/>
            <person name="Ouyang Y."/>
            <person name="Huang Y.G."/>
            <person name="Huang Y.J."/>
            <person name="Long X.L."/>
            <person name="Huang X.L."/>
            <person name="Li S.J."/>
            <person name="Song Y.Z."/>
        </authorList>
    </citation>
    <scope>VARIANTS FHCA2 THR-88; ARG-199 AND PHE-267</scope>
</reference>
<feature type="chain" id="PRO_0000052335" description="Hepatic sodium/bile acid cotransporter">
    <location>
        <begin position="1"/>
        <end position="349"/>
    </location>
</feature>
<feature type="topological domain" description="Extracellular" evidence="17 18 19 20 31 32 33 34 35 36 37 38">
    <location>
        <begin position="1"/>
        <end position="22"/>
    </location>
</feature>
<feature type="transmembrane region" description="Helical; Name=1" evidence="17 18 19 20 31 32 33 34 35 36 37 38">
    <location>
        <begin position="23"/>
        <end position="44"/>
    </location>
</feature>
<feature type="topological domain" description="Cytoplasmic" evidence="17 18 19 20 31 32 33 34 35 36 37 38">
    <location>
        <begin position="45"/>
        <end position="47"/>
    </location>
</feature>
<feature type="transmembrane region" description="Helical; Name=2" evidence="17 18 19 20 31 32 33 34 35 36 37 38">
    <location>
        <begin position="48"/>
        <end position="83"/>
    </location>
</feature>
<feature type="topological domain" description="Extracellular" evidence="17 18 19 20 31 32 33 34 35 36 37 38">
    <location>
        <begin position="84"/>
        <end position="86"/>
    </location>
</feature>
<feature type="transmembrane region" description="Discontinuously helical; Name=3" evidence="17 18 19 20 31 32 33 34 35 36 37 38">
    <location>
        <begin position="87"/>
        <end position="112"/>
    </location>
</feature>
<feature type="topological domain" description="Cytoplasmic" evidence="17 18 19 20 31 32 33 34 35 36 37 38">
    <location>
        <begin position="113"/>
        <end position="115"/>
    </location>
</feature>
<feature type="transmembrane region" description="Helical; Name=4" evidence="17 18 19 20 31 32 33 34 35 36 37 38">
    <location>
        <begin position="116"/>
        <end position="142"/>
    </location>
</feature>
<feature type="topological domain" description="Extracellular" evidence="17 18 19 20 31 32 33 34 35 36 37 38">
    <location>
        <begin position="143"/>
        <end position="156"/>
    </location>
</feature>
<feature type="transmembrane region" description="Helical; Name=5" evidence="17 18 19 20 31 32 33 34 35 36 37 38">
    <location>
        <begin position="157"/>
        <end position="179"/>
    </location>
</feature>
<feature type="topological domain" description="Cytoplasmic" evidence="17 18 19 20 31 32 33 34 35 36 37 38">
    <location>
        <begin position="180"/>
        <end position="183"/>
    </location>
</feature>
<feature type="transmembrane region" description="Helical; Name=6" evidence="17 18 19 20 31 32 33 34 35 36 37 38">
    <location>
        <begin position="184"/>
        <end position="217"/>
    </location>
</feature>
<feature type="topological domain" description="Extracellular" evidence="17 18 19 20 31 32 33 34 35 36 37 38">
    <location>
        <begin position="218"/>
        <end position="219"/>
    </location>
</feature>
<feature type="transmembrane region" description="Helical; Name=7" evidence="17 18 19 20 31 32 33 34 35 36 37 38">
    <location>
        <begin position="220"/>
        <end position="243"/>
    </location>
</feature>
<feature type="topological domain" description="Cytoplasmic" evidence="17 18 19 20 31 32 33 34 35 36 37 38">
    <location>
        <begin position="244"/>
        <end position="247"/>
    </location>
</feature>
<feature type="transmembrane region" description="Discontinuously helical; Name=8" evidence="17 18 19 20 31 32 33 34 35 36 37 38">
    <location>
        <begin position="248"/>
        <end position="273"/>
    </location>
</feature>
<feature type="topological domain" description="Extracellular" evidence="17 18 19 20 31 32 33 34 35 36 37 38">
    <location>
        <begin position="274"/>
        <end position="280"/>
    </location>
</feature>
<feature type="transmembrane region" description="Helical; Name=9" evidence="17 18 19 20 31 32 33 34 35 36 37 38">
    <location>
        <begin position="281"/>
        <end position="311"/>
    </location>
</feature>
<feature type="topological domain" description="Cytoplasmic" evidence="17 18 19 20 31 32 33 34 35 36 37 38">
    <location>
        <begin position="312"/>
        <end position="349"/>
    </location>
</feature>
<feature type="glycosylation site" description="N-linked (GlcNAc...) asparagine" evidence="2">
    <location>
        <position position="5"/>
    </location>
</feature>
<feature type="glycosylation site" description="N-linked (GlcNAc...) asparagine" evidence="2">
    <location>
        <position position="11"/>
    </location>
</feature>
<feature type="sequence variant" id="VAR_085560" description="Decreased function in taurocholate transport; dbSNP:rs200758433." evidence="14">
    <original>R</original>
    <variation>C</variation>
    <location>
        <position position="21"/>
    </location>
</feature>
<feature type="sequence variant" id="VAR_085561" description="Decreased function in taurocholate transport; dbSNP:rs536458730." evidence="14">
    <original>M</original>
    <variation>T</variation>
    <location>
        <position position="39"/>
    </location>
</feature>
<feature type="sequence variant" id="VAR_085562" description="Decreased function in taurocholate transport; dbSNP:rs111885789." evidence="14">
    <original>S</original>
    <variation>L</variation>
    <location>
        <position position="41"/>
    </location>
</feature>
<feature type="sequence variant" id="VAR_085563" description="Decreased function in taurocholate transport; dbSNP:rs202018997." evidence="14">
    <original>A</original>
    <variation>T</variation>
    <location>
        <position position="64"/>
    </location>
</feature>
<feature type="sequence variant" id="VAR_085564" description="Severely decreased function in taurocholate transport; dbSNP:rs763683476." evidence="14">
    <original>P</original>
    <variation>T</variation>
    <location>
        <position position="73"/>
    </location>
</feature>
<feature type="sequence variant" id="VAR_085565" description="In FHCA2; decreased function in taurocholate transport; dbSNP:rs148467625." evidence="12 14 16">
    <original>I</original>
    <variation>T</variation>
    <location>
        <position position="88"/>
    </location>
</feature>
<feature type="sequence variant" id="VAR_085566" description="Loss of function in taurocholate transport; dbSNP:rs543063679." evidence="14">
    <original>L</original>
    <variation>P</variation>
    <location>
        <position position="138"/>
    </location>
</feature>
<feature type="sequence variant" id="VAR_085567" description="Decreased function in taurocholate transport; dbSNP:rs144006534." evidence="14">
    <original>I</original>
    <variation>M</variation>
    <location>
        <position position="159"/>
    </location>
</feature>
<feature type="sequence variant" id="VAR_085568" description="Decreased function in taurocholate transport; dbSNP:rs571796903." evidence="14">
    <original>R</original>
    <variation>Q</variation>
    <location>
        <position position="180"/>
    </location>
</feature>
<feature type="sequence variant" id="VAR_085569" description="Decreased function in taurocholate transport; dbSNP:rs553948182." evidence="14">
    <original>G</original>
    <variation>E</variation>
    <location>
        <position position="190"/>
    </location>
</feature>
<feature type="sequence variant" id="VAR_085570" description="In FHCA2; dbSNP:rs746174545." evidence="13 16">
    <original>S</original>
    <variation>R</variation>
    <location>
        <position position="199"/>
    </location>
</feature>
<feature type="sequence variant" id="VAR_085571" description="Decreased transport of taurocholate and cholate; decreased transport of estron sulfate; decreased expression at the cell membrane due to intracellular retention; dbSNP:rs61745930." evidence="5">
    <original>I</original>
    <variation>T</variation>
    <location>
        <position position="223"/>
    </location>
</feature>
<feature type="sequence variant" id="VAR_085572" description="Slightly decreased function in taurocholate transport; dbSNP:rs190268737." evidence="14">
    <original>I</original>
    <variation>T</variation>
    <location>
        <position position="232"/>
    </location>
</feature>
<feature type="sequence variant" id="VAR_085573" description="Severely decreased function in taurocholate transport; dbSNP:rs139931299." evidence="14">
    <original>F</original>
    <variation>L</variation>
    <location>
        <position position="234"/>
    </location>
</feature>
<feature type="sequence variant" id="VAR_085574" description="Loss of function in taurocholate transport; dbSNP:rs150579813." evidence="14">
    <original>S</original>
    <variation>F</variation>
    <location>
        <position position="241"/>
    </location>
</feature>
<feature type="sequence variant" id="VAR_085575" description="Severely decreased function in taurocholate transport; dbSNP:rs76966244." evidence="14">
    <original>R</original>
    <variation>W</variation>
    <location>
        <position position="249"/>
    </location>
</feature>
<feature type="sequence variant" id="VAR_085576" description="Severely decreased function in taurocholate transport; dbSNP:rs141269120." evidence="14">
    <original>R</original>
    <variation>C</variation>
    <location>
        <position position="252"/>
    </location>
</feature>
<feature type="sequence variant" id="VAR_085577" description="In FHCA2; loss of function in taurocholate transport; loss of localization to the cell membrane due to intracellular retention; dbSNP:rs147226818." evidence="7">
    <original>R</original>
    <variation>H</variation>
    <location>
        <position position="252"/>
    </location>
</feature>
<feature type="sequence variant" id="VAR_085578" description="Severely decreased function in taurocholate transport; dbSNP:rs141269120." evidence="14">
    <original>R</original>
    <variation>S</variation>
    <location>
        <position position="252"/>
    </location>
</feature>
<feature type="sequence variant" id="VAR_085579" description="Decreased function in taurocholate transport; dbSNP:rs541801766." evidence="14">
    <original>T</original>
    <variation>S</variation>
    <location>
        <position position="258"/>
    </location>
</feature>
<feature type="sequence variant" id="VAR_022113" description="In FHCA2; protective factor against hepatitis B virus infection and chronic hepatitis; unable to transport taurocholate and cholate; does not affect uptake of estrone sulfate; does not affect localization to the cell membrane; disrupts interaction with HBV myristoylated pre-S1 peptide; dbSNP:rs2296651." evidence="5 8 9 10 11 12 13 16 18">
    <original>S</original>
    <variation>F</variation>
    <location>
        <position position="267"/>
    </location>
</feature>
<feature type="sequence variant" id="VAR_085580" description="Decreased transport of taurocholate and cholate; decreased transport of estron sulfate; does not affect localization to the cell membrane; dbSNP:rs72547507." evidence="5 14">
    <original>I</original>
    <variation>T</variation>
    <location>
        <position position="279"/>
    </location>
</feature>
<feature type="sequence variant" id="VAR_085581" description="Decreased function in taurocholate transport; dbSNP:rs189313778." evidence="14">
    <original>Q</original>
    <variation>E</variation>
    <location>
        <position position="293"/>
    </location>
</feature>
<feature type="sequence variant" id="VAR_085582" description="Decreased transport of taurocholate and cholate; decreased transport of estron sulfate; does not affect localization to the cell membrane; dbSNP:rs72547506." evidence="5">
    <original>K</original>
    <variation>E</variation>
    <location>
        <position position="314"/>
    </location>
</feature>
<feature type="mutagenesis site" description="Disrupts interaction with HBV myristoylated pre-S1 peptide." evidence="18">
    <original>K</original>
    <variation>W</variation>
    <location>
        <position position="20"/>
    </location>
</feature>
<feature type="mutagenesis site" description="Disrupts interaction with HBV myristoylated pre-S1 peptide. Abolishes pre-S1-mediated attactment to HBV and the transport of bile acid; when associated with W-31. Abolishes pre-S1-mediated attactment to HBV and the transport of bile acid; when associated with W-31 and W-35." evidence="18 19">
    <original>L</original>
    <variation>W</variation>
    <location>
        <position position="27"/>
    </location>
</feature>
<feature type="mutagenesis site" description="Abolishes pre-S1-mediated attactment to HBV and the transport of bile acid; when associated with W-27. Abolishes pre-S1-mediated attactment to HBV and the transport of bile acid; when associated with W-35. Abolishes pre-S1-mediated attactment to HBV and the transport of bile acid; when associated with W-27 and W-35." evidence="19">
    <original>L</original>
    <variation>W</variation>
    <location>
        <position position="31"/>
    </location>
</feature>
<feature type="mutagenesis site" description="Abolishes pre-S1-mediated attactment to HBV and the transport of bile acid; when associated with W-31. Abolishes pre-S1-mediated attactment to HBV and the transport of bile acid; when associated with W-27 and W-31." evidence="19">
    <original>L</original>
    <variation>W</variation>
    <location>
        <position position="35"/>
    </location>
</feature>
<feature type="mutagenesis site" description="Disrupts interaction with HBV myristoylated pre-S1 peptide." evidence="18">
    <original>V</original>
    <variation>W</variation>
    <location>
        <position position="202"/>
    </location>
</feature>
<feature type="mutagenesis site" description="Abolishes interaction with HBV myristoylated pre-S1 peptide." evidence="18">
    <original>Q</original>
    <variation>A</variation>
    <location>
        <position position="261"/>
    </location>
</feature>
<feature type="mutagenesis site" description="Disrupts interaction with HBV myristoylated pre-S1 peptide." evidence="18">
    <original>V</original>
    <variation>W</variation>
    <location>
        <position position="263"/>
    </location>
</feature>
<feature type="mutagenesis site" description="Disrupts interaction with HBV myristoylated pre-S1 peptide, reduces bile acid transport and reduces HBV infection." evidence="20">
    <original>Q</original>
    <variation>A</variation>
    <variation>W</variation>
    <location>
        <position position="264"/>
    </location>
</feature>
<feature type="mutagenesis site" description="Disrupts interaction with HBV myristoylated pre-S1 peptide, reduces bile acid transport and reduces HBV infection." evidence="20">
    <original>T</original>
    <variation>W</variation>
    <location>
        <position position="268"/>
    </location>
</feature>
<feature type="mutagenesis site" description="Disrupts interaction with HBV myristoylated pre-S1 peptide, reduces bile acid transport and reduces HBV infection." evidence="20">
    <original>V</original>
    <variation>W</variation>
    <location>
        <position position="272"/>
    </location>
</feature>
<feature type="strand" evidence="41">
    <location>
        <begin position="18"/>
        <end position="21"/>
    </location>
</feature>
<feature type="helix" evidence="40">
    <location>
        <begin position="22"/>
        <end position="42"/>
    </location>
</feature>
<feature type="helix" evidence="40">
    <location>
        <begin position="43"/>
        <end position="45"/>
    </location>
</feature>
<feature type="helix" evidence="40">
    <location>
        <begin position="48"/>
        <end position="56"/>
    </location>
</feature>
<feature type="helix" evidence="40">
    <location>
        <begin position="60"/>
        <end position="69"/>
    </location>
</feature>
<feature type="helix" evidence="40">
    <location>
        <begin position="72"/>
        <end position="82"/>
    </location>
</feature>
<feature type="helix" evidence="40">
    <location>
        <begin position="87"/>
        <end position="96"/>
    </location>
</feature>
<feature type="helix" evidence="40">
    <location>
        <begin position="104"/>
        <end position="111"/>
    </location>
</feature>
<feature type="helix" evidence="40">
    <location>
        <begin position="116"/>
        <end position="141"/>
    </location>
</feature>
<feature type="turn" evidence="39">
    <location>
        <begin position="143"/>
        <end position="145"/>
    </location>
</feature>
<feature type="strand" evidence="40">
    <location>
        <begin position="146"/>
        <end position="148"/>
    </location>
</feature>
<feature type="helix" evidence="40">
    <location>
        <begin position="151"/>
        <end position="153"/>
    </location>
</feature>
<feature type="helix" evidence="40">
    <location>
        <begin position="156"/>
        <end position="179"/>
    </location>
</feature>
<feature type="helix" evidence="40">
    <location>
        <begin position="181"/>
        <end position="183"/>
    </location>
</feature>
<feature type="helix" evidence="40">
    <location>
        <begin position="184"/>
        <end position="212"/>
    </location>
</feature>
<feature type="helix" evidence="41">
    <location>
        <begin position="214"/>
        <end position="217"/>
    </location>
</feature>
<feature type="helix" evidence="40">
    <location>
        <begin position="220"/>
        <end position="243"/>
    </location>
</feature>
<feature type="helix" evidence="40">
    <location>
        <begin position="248"/>
        <end position="259"/>
    </location>
</feature>
<feature type="helix" evidence="40">
    <location>
        <begin position="263"/>
        <end position="273"/>
    </location>
</feature>
<feature type="turn" evidence="40">
    <location>
        <begin position="276"/>
        <end position="278"/>
    </location>
</feature>
<feature type="helix" evidence="40">
    <location>
        <begin position="280"/>
        <end position="282"/>
    </location>
</feature>
<feature type="helix" evidence="40">
    <location>
        <begin position="285"/>
        <end position="309"/>
    </location>
</feature>
<sequence>MEAHNASAPFNFTLPPNFGKRPTDLALSVILVFMLFFIMLSLGCTMEFSKIKAHLWKPKGLAIALVAQYGIMPLTAFVLGKVFRLKNIEALAILVCGCSPGGNLSNVFSLAMKGDMNLSIVMTTCSTFCALGMMPLLLYIYSRGIYDGDLKDKVPYKGIVISLVLVLIPCTIGIVLKSKRPQYMRYVIKGGMIIILLCSVAVTVLSAINVGKSIMFAMTPLLIATSSLMPFIGFLLGYVLSALFCLNGRCRRTVSMETGCQNVQLCSTILNVAFPPEVIGPLFFFPLLYMIFQLGEGLLLIAIFWCYEKFKTPKDKTKMIYTAATTEETIPGALGNGTYKGEDCSPCTA</sequence>
<protein>
    <recommendedName>
        <fullName>Hepatic sodium/bile acid cotransporter</fullName>
    </recommendedName>
    <alternativeName>
        <fullName>Cell growth-inhibiting gene 29 protein</fullName>
    </alternativeName>
    <alternativeName>
        <fullName>Na(+)/bile acid cotransporter</fullName>
    </alternativeName>
    <alternativeName>
        <fullName>Na(+)/taurocholate transport protein</fullName>
    </alternativeName>
    <alternativeName>
        <fullName evidence="23 24">Sodium/taurocholate cotransporting polypeptide</fullName>
        <shortName evidence="23 24 26 27 28 29">NTCP</shortName>
    </alternativeName>
    <alternativeName>
        <fullName>Solute carrier family 10 member 1</fullName>
        <shortName evidence="23 24">SLC10A1</shortName>
    </alternativeName>
</protein>
<dbReference type="EMBL" id="L21893">
    <property type="protein sequence ID" value="AAA36381.1"/>
    <property type="molecule type" value="mRNA"/>
</dbReference>
<dbReference type="EMBL" id="AY544127">
    <property type="protein sequence ID" value="AAT11158.1"/>
    <property type="molecule type" value="mRNA"/>
</dbReference>
<dbReference type="EMBL" id="CH471061">
    <property type="protein sequence ID" value="EAW81011.1"/>
    <property type="molecule type" value="Genomic_DNA"/>
</dbReference>
<dbReference type="EMBL" id="BC069799">
    <property type="protein sequence ID" value="AAH69799.1"/>
    <property type="molecule type" value="mRNA"/>
</dbReference>
<dbReference type="EMBL" id="BC069822">
    <property type="protein sequence ID" value="AAH69822.1"/>
    <property type="molecule type" value="mRNA"/>
</dbReference>
<dbReference type="EMBL" id="BC074724">
    <property type="protein sequence ID" value="AAH74724.1"/>
    <property type="molecule type" value="mRNA"/>
</dbReference>
<dbReference type="EMBL" id="BC126298">
    <property type="protein sequence ID" value="AAI26299.1"/>
    <property type="molecule type" value="mRNA"/>
</dbReference>
<dbReference type="EMBL" id="BC136355">
    <property type="protein sequence ID" value="AAI36356.1"/>
    <property type="molecule type" value="mRNA"/>
</dbReference>
<dbReference type="CCDS" id="CCDS9797.1"/>
<dbReference type="PIR" id="I55601">
    <property type="entry name" value="I55601"/>
</dbReference>
<dbReference type="RefSeq" id="NP_003040.1">
    <property type="nucleotide sequence ID" value="NM_003049.4"/>
</dbReference>
<dbReference type="PDB" id="7FCI">
    <property type="method" value="EM"/>
    <property type="resolution" value="3.30 A"/>
    <property type="chains" value="A=1-349"/>
</dbReference>
<dbReference type="PDB" id="7PQG">
    <property type="method" value="EM"/>
    <property type="resolution" value="3.70 A"/>
    <property type="chains" value="A=3-328"/>
</dbReference>
<dbReference type="PDB" id="7PQQ">
    <property type="method" value="EM"/>
    <property type="resolution" value="3.30 A"/>
    <property type="chains" value="A=3-328"/>
</dbReference>
<dbReference type="PDB" id="7VAD">
    <property type="method" value="EM"/>
    <property type="resolution" value="3.41 A"/>
    <property type="chains" value="A=1-319"/>
</dbReference>
<dbReference type="PDB" id="7VAG">
    <property type="method" value="EM"/>
    <property type="resolution" value="3.32 A"/>
    <property type="chains" value="A=1-319"/>
</dbReference>
<dbReference type="PDB" id="7WSI">
    <property type="method" value="EM"/>
    <property type="resolution" value="3.32 A"/>
    <property type="chains" value="A=1-319"/>
</dbReference>
<dbReference type="PDB" id="7ZYI">
    <property type="method" value="EM"/>
    <property type="resolution" value="2.88 A"/>
    <property type="chains" value="A=1-349"/>
</dbReference>
<dbReference type="PDB" id="8HRX">
    <property type="method" value="EM"/>
    <property type="resolution" value="2.89 A"/>
    <property type="chains" value="A=1-320"/>
</dbReference>
<dbReference type="PDB" id="8HRY">
    <property type="method" value="EM"/>
    <property type="resolution" value="3.11 A"/>
    <property type="chains" value="A=1-320"/>
</dbReference>
<dbReference type="PDB" id="8RQF">
    <property type="method" value="EM"/>
    <property type="resolution" value="3.41 A"/>
    <property type="chains" value="A=1-349"/>
</dbReference>
<dbReference type="PDBsum" id="7FCI"/>
<dbReference type="PDBsum" id="7PQG"/>
<dbReference type="PDBsum" id="7PQQ"/>
<dbReference type="PDBsum" id="7VAD"/>
<dbReference type="PDBsum" id="7VAG"/>
<dbReference type="PDBsum" id="7WSI"/>
<dbReference type="PDBsum" id="7ZYI"/>
<dbReference type="PDBsum" id="8HRX"/>
<dbReference type="PDBsum" id="8HRY"/>
<dbReference type="PDBsum" id="8RQF"/>
<dbReference type="EMDB" id="EMD-13593"/>
<dbReference type="EMDB" id="EMD-13596"/>
<dbReference type="EMDB" id="EMD-15024"/>
<dbReference type="EMDB" id="EMD-19440"/>
<dbReference type="EMDB" id="EMD-31526"/>
<dbReference type="EMDB" id="EMD-31837"/>
<dbReference type="EMDB" id="EMD-31840"/>
<dbReference type="EMDB" id="EMD-32759"/>
<dbReference type="EMDB" id="EMD-34981"/>
<dbReference type="EMDB" id="EMD-34982"/>
<dbReference type="SMR" id="Q14973"/>
<dbReference type="BioGRID" id="112443">
    <property type="interactions" value="124"/>
</dbReference>
<dbReference type="CORUM" id="Q14973"/>
<dbReference type="FunCoup" id="Q14973">
    <property type="interactions" value="42"/>
</dbReference>
<dbReference type="IntAct" id="Q14973">
    <property type="interactions" value="95"/>
</dbReference>
<dbReference type="MINT" id="Q14973"/>
<dbReference type="STRING" id="9606.ENSP00000216540"/>
<dbReference type="BindingDB" id="Q14973"/>
<dbReference type="ChEMBL" id="CHEMBL5287"/>
<dbReference type="DrugBank" id="DB15059">
    <property type="generic name" value="Aprocitentan"/>
</dbReference>
<dbReference type="DrugBank" id="DB15248">
    <property type="generic name" value="Bulevirtide"/>
</dbReference>
<dbReference type="DrugBank" id="DB00887">
    <property type="generic name" value="Bumetanide"/>
</dbReference>
<dbReference type="DrugBank" id="DB02659">
    <property type="generic name" value="Cholic Acid"/>
</dbReference>
<dbReference type="DrugBank" id="DB00286">
    <property type="generic name" value="Conjugated estrogens"/>
</dbReference>
<dbReference type="DrugBank" id="DB00091">
    <property type="generic name" value="Cyclosporine"/>
</dbReference>
<dbReference type="DrugBank" id="DB03619">
    <property type="generic name" value="Deoxycholic acid"/>
</dbReference>
<dbReference type="DrugBank" id="DB04574">
    <property type="generic name" value="Estrone sulfate"/>
</dbReference>
<dbReference type="DrugBank" id="DB00977">
    <property type="generic name" value="Ethinylestradiol"/>
</dbReference>
<dbReference type="DrugBank" id="DB02123">
    <property type="generic name" value="Glycochenodeoxycholic Acid"/>
</dbReference>
<dbReference type="DrugBank" id="DB00328">
    <property type="generic name" value="Indomethacin"/>
</dbReference>
<dbReference type="DrugBank" id="DB00279">
    <property type="generic name" value="Liothyronine"/>
</dbReference>
<dbReference type="DrugBank" id="DB01583">
    <property type="generic name" value="Liotrix"/>
</dbReference>
<dbReference type="DrugBank" id="DB16226">
    <property type="generic name" value="Maralixibat"/>
</dbReference>
<dbReference type="DrugBank" id="DB08860">
    <property type="generic name" value="Pitavastatin"/>
</dbReference>
<dbReference type="DrugBank" id="DB01032">
    <property type="generic name" value="Probenecid"/>
</dbReference>
<dbReference type="DrugBank" id="DB00396">
    <property type="generic name" value="Progesterone"/>
</dbReference>
<dbReference type="DrugBank" id="DB14761">
    <property type="generic name" value="Remdesivir"/>
</dbReference>
<dbReference type="DrugBank" id="DB00412">
    <property type="generic name" value="Rosiglitazone"/>
</dbReference>
<dbReference type="DrugBank" id="DB01098">
    <property type="generic name" value="Rosuvastatin"/>
</dbReference>
<dbReference type="DrugBank" id="DB06290">
    <property type="generic name" value="Simeprevir"/>
</dbReference>
<dbReference type="DrugBank" id="DB00795">
    <property type="generic name" value="Sulfasalazine"/>
</dbReference>
<dbReference type="DrugBank" id="DB13215">
    <property type="generic name" value="Sulfobromophthalein"/>
</dbReference>
<dbReference type="DrugBank" id="DB04348">
    <property type="generic name" value="Taurocholic acid"/>
</dbReference>
<dbReference type="DrugBank" id="DB00624">
    <property type="generic name" value="Testosterone"/>
</dbReference>
<dbReference type="DrugBank" id="DB13943">
    <property type="generic name" value="Testosterone cypionate"/>
</dbReference>
<dbReference type="DrugBank" id="DB13944">
    <property type="generic name" value="Testosterone enanthate"/>
</dbReference>
<dbReference type="DrugBank" id="DB13946">
    <property type="generic name" value="Testosterone undecanoate"/>
</dbReference>
<dbReference type="DrugBank" id="DB09100">
    <property type="generic name" value="Thyroid, porcine"/>
</dbReference>
<dbReference type="DrugBank" id="DB03604">
    <property type="generic name" value="Tiratricol"/>
</dbReference>
<dbReference type="DrugBank" id="DB01586">
    <property type="generic name" value="Ursodeoxycholic acid"/>
</dbReference>
<dbReference type="DrugBank" id="DB00549">
    <property type="generic name" value="Zafirlukast"/>
</dbReference>
<dbReference type="DrugBank" id="DB15688">
    <property type="generic name" value="Zavegepant"/>
</dbReference>
<dbReference type="DrugCentral" id="Q14973"/>
<dbReference type="GuidetoPHARMACOLOGY" id="959"/>
<dbReference type="TCDB" id="2.A.28.1.9">
    <property type="family name" value="the bile acid:na(+) symporter (bass) family"/>
</dbReference>
<dbReference type="GlyCosmos" id="Q14973">
    <property type="glycosylation" value="4 sites, No reported glycans"/>
</dbReference>
<dbReference type="GlyGen" id="Q14973">
    <property type="glycosylation" value="4 sites"/>
</dbReference>
<dbReference type="iPTMnet" id="Q14973"/>
<dbReference type="PhosphoSitePlus" id="Q14973"/>
<dbReference type="BioMuta" id="SLC10A1"/>
<dbReference type="DMDM" id="2498046"/>
<dbReference type="jPOST" id="Q14973"/>
<dbReference type="MassIVE" id="Q14973"/>
<dbReference type="PaxDb" id="9606-ENSP00000216540"/>
<dbReference type="PeptideAtlas" id="Q14973"/>
<dbReference type="Antibodypedia" id="47330">
    <property type="antibodies" value="208 antibodies from 28 providers"/>
</dbReference>
<dbReference type="DNASU" id="6554"/>
<dbReference type="Ensembl" id="ENST00000216540.5">
    <property type="protein sequence ID" value="ENSP00000216540.4"/>
    <property type="gene ID" value="ENSG00000100652.5"/>
</dbReference>
<dbReference type="GeneID" id="6554"/>
<dbReference type="KEGG" id="hsa:6554"/>
<dbReference type="MANE-Select" id="ENST00000216540.5">
    <property type="protein sequence ID" value="ENSP00000216540.4"/>
    <property type="RefSeq nucleotide sequence ID" value="NM_003049.4"/>
    <property type="RefSeq protein sequence ID" value="NP_003040.1"/>
</dbReference>
<dbReference type="UCSC" id="uc001xlr.3">
    <property type="organism name" value="human"/>
</dbReference>
<dbReference type="AGR" id="HGNC:10905"/>
<dbReference type="CTD" id="6554"/>
<dbReference type="DisGeNET" id="6554"/>
<dbReference type="GeneCards" id="SLC10A1"/>
<dbReference type="HGNC" id="HGNC:10905">
    <property type="gene designation" value="SLC10A1"/>
</dbReference>
<dbReference type="HPA" id="ENSG00000100652">
    <property type="expression patterns" value="Tissue enriched (liver)"/>
</dbReference>
<dbReference type="MalaCards" id="SLC10A1"/>
<dbReference type="MIM" id="182396">
    <property type="type" value="gene"/>
</dbReference>
<dbReference type="MIM" id="619256">
    <property type="type" value="phenotype"/>
</dbReference>
<dbReference type="neXtProt" id="NX_Q14973"/>
<dbReference type="OpenTargets" id="ENSG00000100652"/>
<dbReference type="Orphanet" id="238475">
    <property type="disease" value="Familial hypercholanemia"/>
</dbReference>
<dbReference type="PharmGKB" id="PA317"/>
<dbReference type="VEuPathDB" id="HostDB:ENSG00000100652"/>
<dbReference type="eggNOG" id="KOG2718">
    <property type="taxonomic scope" value="Eukaryota"/>
</dbReference>
<dbReference type="GeneTree" id="ENSGT00950000182808"/>
<dbReference type="HOGENOM" id="CLU_034788_7_5_1"/>
<dbReference type="InParanoid" id="Q14973"/>
<dbReference type="OMA" id="CYEKIKP"/>
<dbReference type="OrthoDB" id="203097at2759"/>
<dbReference type="PAN-GO" id="Q14973">
    <property type="GO annotations" value="2 GO annotations based on evolutionary models"/>
</dbReference>
<dbReference type="PhylomeDB" id="Q14973"/>
<dbReference type="TreeFam" id="TF315811"/>
<dbReference type="PathwayCommons" id="Q14973"/>
<dbReference type="Reactome" id="R-HSA-159418">
    <property type="pathway name" value="Recycling of bile acids and salts"/>
</dbReference>
<dbReference type="SignaLink" id="Q14973"/>
<dbReference type="BioGRID-ORCS" id="6554">
    <property type="hits" value="9 hits in 1144 CRISPR screens"/>
</dbReference>
<dbReference type="ChiTaRS" id="SLC10A1">
    <property type="organism name" value="human"/>
</dbReference>
<dbReference type="GeneWiki" id="SLC10A1"/>
<dbReference type="GenomeRNAi" id="6554"/>
<dbReference type="Pharos" id="Q14973">
    <property type="development level" value="Tclin"/>
</dbReference>
<dbReference type="PRO" id="PR:Q14973"/>
<dbReference type="Proteomes" id="UP000005640">
    <property type="component" value="Chromosome 14"/>
</dbReference>
<dbReference type="RNAct" id="Q14973">
    <property type="molecule type" value="protein"/>
</dbReference>
<dbReference type="Bgee" id="ENSG00000100652">
    <property type="expression patterns" value="Expressed in right lobe of liver and 64 other cell types or tissues"/>
</dbReference>
<dbReference type="GO" id="GO:0016323">
    <property type="term" value="C:basolateral plasma membrane"/>
    <property type="evidence" value="ECO:0000250"/>
    <property type="project" value="UniProtKB"/>
</dbReference>
<dbReference type="GO" id="GO:0005886">
    <property type="term" value="C:plasma membrane"/>
    <property type="evidence" value="ECO:0000314"/>
    <property type="project" value="UniProtKB"/>
</dbReference>
<dbReference type="GO" id="GO:0015125">
    <property type="term" value="F:bile acid transmembrane transporter activity"/>
    <property type="evidence" value="ECO:0000314"/>
    <property type="project" value="UniProtKB"/>
</dbReference>
<dbReference type="GO" id="GO:0008508">
    <property type="term" value="F:bile acid:sodium symporter activity"/>
    <property type="evidence" value="ECO:0000318"/>
    <property type="project" value="GO_Central"/>
</dbReference>
<dbReference type="GO" id="GO:0001618">
    <property type="term" value="F:virus receptor activity"/>
    <property type="evidence" value="ECO:0007669"/>
    <property type="project" value="UniProtKB-KW"/>
</dbReference>
<dbReference type="GO" id="GO:0015721">
    <property type="term" value="P:bile acid and bile salt transport"/>
    <property type="evidence" value="ECO:0000318"/>
    <property type="project" value="GO_Central"/>
</dbReference>
<dbReference type="GO" id="GO:0071466">
    <property type="term" value="P:cellular response to xenobiotic stimulus"/>
    <property type="evidence" value="ECO:0007669"/>
    <property type="project" value="Ensembl"/>
</dbReference>
<dbReference type="GO" id="GO:0043627">
    <property type="term" value="P:response to estrogen"/>
    <property type="evidence" value="ECO:0007669"/>
    <property type="project" value="Ensembl"/>
</dbReference>
<dbReference type="GO" id="GO:0045471">
    <property type="term" value="P:response to ethanol"/>
    <property type="evidence" value="ECO:0007669"/>
    <property type="project" value="Ensembl"/>
</dbReference>
<dbReference type="GO" id="GO:0031667">
    <property type="term" value="P:response to nutrient levels"/>
    <property type="evidence" value="ECO:0007669"/>
    <property type="project" value="Ensembl"/>
</dbReference>
<dbReference type="FunFam" id="1.20.1530.20:FF:000016">
    <property type="entry name" value="Solute carrier family 10 member 1"/>
    <property type="match status" value="1"/>
</dbReference>
<dbReference type="Gene3D" id="1.20.1530.20">
    <property type="match status" value="1"/>
</dbReference>
<dbReference type="InterPro" id="IPR002657">
    <property type="entry name" value="BilAc:Na_symport/Acr3"/>
</dbReference>
<dbReference type="InterPro" id="IPR004710">
    <property type="entry name" value="Bilac:Na_transpt"/>
</dbReference>
<dbReference type="InterPro" id="IPR038770">
    <property type="entry name" value="Na+/solute_symporter_sf"/>
</dbReference>
<dbReference type="NCBIfam" id="TIGR00841">
    <property type="entry name" value="bass"/>
    <property type="match status" value="1"/>
</dbReference>
<dbReference type="PANTHER" id="PTHR10361:SF40">
    <property type="entry name" value="HEPATIC SODIUM_BILE ACID COTRANSPORTER"/>
    <property type="match status" value="1"/>
</dbReference>
<dbReference type="PANTHER" id="PTHR10361">
    <property type="entry name" value="SODIUM-BILE ACID COTRANSPORTER"/>
    <property type="match status" value="1"/>
</dbReference>
<dbReference type="Pfam" id="PF01758">
    <property type="entry name" value="SBF"/>
    <property type="match status" value="1"/>
</dbReference>